<protein>
    <recommendedName>
        <fullName>Copper-transporting ATPase 1</fullName>
        <ecNumber evidence="9 42">7.2.2.8</ecNumber>
    </recommendedName>
    <alternativeName>
        <fullName>Copper pump 1</fullName>
    </alternativeName>
    <alternativeName>
        <fullName>Menkes disease-associated protein</fullName>
    </alternativeName>
</protein>
<keyword id="KW-0002">3D-structure</keyword>
<keyword id="KW-0025">Alternative splicing</keyword>
<keyword id="KW-0067">ATP-binding</keyword>
<keyword id="KW-1003">Cell membrane</keyword>
<keyword id="KW-0966">Cell projection</keyword>
<keyword id="KW-0186">Copper</keyword>
<keyword id="KW-0187">Copper transport</keyword>
<keyword id="KW-0963">Cytoplasm</keyword>
<keyword id="KW-0225">Disease variant</keyword>
<keyword id="KW-0256">Endoplasmic reticulum</keyword>
<keyword id="KW-0967">Endosome</keyword>
<keyword id="KW-0325">Glycoprotein</keyword>
<keyword id="KW-0333">Golgi apparatus</keyword>
<keyword id="KW-0406">Ion transport</keyword>
<keyword id="KW-0460">Magnesium</keyword>
<keyword id="KW-0472">Membrane</keyword>
<keyword id="KW-0479">Metal-binding</keyword>
<keyword id="KW-0523">Neurodegeneration</keyword>
<keyword id="KW-0622">Neuropathy</keyword>
<keyword id="KW-0547">Nucleotide-binding</keyword>
<keyword id="KW-0597">Phosphoprotein</keyword>
<keyword id="KW-1267">Proteomics identification</keyword>
<keyword id="KW-1185">Reference proteome</keyword>
<keyword id="KW-0677">Repeat</keyword>
<keyword id="KW-0770">Synapse</keyword>
<keyword id="KW-1278">Translocase</keyword>
<keyword id="KW-0812">Transmembrane</keyword>
<keyword id="KW-1133">Transmembrane helix</keyword>
<keyword id="KW-0813">Transport</keyword>
<feature type="chain" id="PRO_0000046311" description="Copper-transporting ATPase 1">
    <location>
        <begin position="1"/>
        <end position="1500"/>
    </location>
</feature>
<feature type="topological domain" description="Cytoplasmic" evidence="4">
    <location>
        <begin position="1"/>
        <end position="653"/>
    </location>
</feature>
<feature type="transmembrane region" description="Helical" evidence="4">
    <location>
        <begin position="654"/>
        <end position="675"/>
    </location>
</feature>
<feature type="topological domain" description="Extracellular" evidence="4">
    <location>
        <begin position="676"/>
        <end position="714"/>
    </location>
</feature>
<feature type="transmembrane region" description="Helical" evidence="4">
    <location>
        <begin position="715"/>
        <end position="734"/>
    </location>
</feature>
<feature type="topological domain" description="Cytoplasmic" evidence="4">
    <location>
        <begin position="735"/>
        <end position="741"/>
    </location>
</feature>
<feature type="transmembrane region" description="Helical" evidence="4">
    <location>
        <begin position="742"/>
        <end position="762"/>
    </location>
</feature>
<feature type="topological domain" description="Extracellular" evidence="4">
    <location>
        <begin position="763"/>
        <end position="781"/>
    </location>
</feature>
<feature type="transmembrane region" description="Helical" evidence="4">
    <location>
        <begin position="782"/>
        <end position="802"/>
    </location>
</feature>
<feature type="topological domain" description="Cytoplasmic" evidence="4">
    <location>
        <begin position="803"/>
        <end position="936"/>
    </location>
</feature>
<feature type="transmembrane region" description="Helical" evidence="4">
    <location>
        <begin position="937"/>
        <end position="959"/>
    </location>
</feature>
<feature type="topological domain" description="Extracellular" evidence="4">
    <location>
        <begin position="960"/>
        <end position="989"/>
    </location>
</feature>
<feature type="transmembrane region" description="Helical" evidence="4">
    <location>
        <begin position="990"/>
        <end position="1011"/>
    </location>
</feature>
<feature type="topological domain" description="Cytoplasmic" evidence="4">
    <location>
        <begin position="1012"/>
        <end position="1356"/>
    </location>
</feature>
<feature type="transmembrane region" description="Helical" evidence="4">
    <location>
        <begin position="1357"/>
        <end position="1374"/>
    </location>
</feature>
<feature type="topological domain" description="Extracellular" evidence="4">
    <location>
        <begin position="1375"/>
        <end position="1385"/>
    </location>
</feature>
<feature type="transmembrane region" description="Helical" evidence="4">
    <location>
        <begin position="1386"/>
        <end position="1405"/>
    </location>
</feature>
<feature type="topological domain" description="Cytoplasmic" evidence="4">
    <location>
        <begin position="1406"/>
        <end position="1500"/>
    </location>
</feature>
<feature type="domain" description="HMA 1" evidence="5">
    <location>
        <begin position="8"/>
        <end position="74"/>
    </location>
</feature>
<feature type="domain" description="HMA 2" evidence="5">
    <location>
        <begin position="85"/>
        <end position="151"/>
    </location>
</feature>
<feature type="domain" description="HMA 3" evidence="5">
    <location>
        <begin position="171"/>
        <end position="237"/>
    </location>
</feature>
<feature type="domain" description="HMA 4" evidence="5">
    <location>
        <begin position="277"/>
        <end position="343"/>
    </location>
</feature>
<feature type="domain" description="HMA 5" evidence="5">
    <location>
        <begin position="377"/>
        <end position="443"/>
    </location>
</feature>
<feature type="domain" description="HMA 6" evidence="5">
    <location>
        <begin position="488"/>
        <end position="554"/>
    </location>
</feature>
<feature type="domain" description="HMA 7" evidence="5">
    <location>
        <begin position="564"/>
        <end position="630"/>
    </location>
</feature>
<feature type="region of interest" description="PDZD11-binding">
    <location>
        <begin position="1486"/>
        <end position="1500"/>
    </location>
</feature>
<feature type="short sequence motif" description="Endocytosis signal" evidence="3">
    <location>
        <begin position="1467"/>
        <end position="1468"/>
    </location>
</feature>
<feature type="short sequence motif" description="Endocytosis signal" evidence="3">
    <location>
        <begin position="1487"/>
        <end position="1488"/>
    </location>
</feature>
<feature type="active site" description="4-aspartylphosphate intermediate" evidence="1">
    <location>
        <position position="1044"/>
    </location>
</feature>
<feature type="binding site" evidence="26 44">
    <location>
        <position position="18"/>
    </location>
    <ligand>
        <name>Cu(+)</name>
        <dbReference type="ChEBI" id="CHEBI:49552"/>
        <label>1</label>
    </ligand>
</feature>
<feature type="binding site" evidence="5 26 44">
    <location>
        <position position="19"/>
    </location>
    <ligand>
        <name>Cu(+)</name>
        <dbReference type="ChEBI" id="CHEBI:49552"/>
        <label>1</label>
    </ligand>
</feature>
<feature type="binding site" evidence="5 26 44">
    <location>
        <position position="22"/>
    </location>
    <ligand>
        <name>Cu(+)</name>
        <dbReference type="ChEBI" id="CHEBI:49552"/>
        <label>1</label>
    </ligand>
</feature>
<feature type="binding site" evidence="5">
    <location>
        <position position="182"/>
    </location>
    <ligand>
        <name>Cu(+)</name>
        <dbReference type="ChEBI" id="CHEBI:49552"/>
        <label>2</label>
    </ligand>
</feature>
<feature type="binding site" evidence="5">
    <location>
        <position position="185"/>
    </location>
    <ligand>
        <name>Cu(+)</name>
        <dbReference type="ChEBI" id="CHEBI:49552"/>
        <label>2</label>
    </ligand>
</feature>
<feature type="binding site" evidence="5">
    <location>
        <position position="288"/>
    </location>
    <ligand>
        <name>Cu(+)</name>
        <dbReference type="ChEBI" id="CHEBI:49552"/>
        <label>3</label>
    </ligand>
</feature>
<feature type="binding site" evidence="5">
    <location>
        <position position="291"/>
    </location>
    <ligand>
        <name>Cu(+)</name>
        <dbReference type="ChEBI" id="CHEBI:49552"/>
        <label>3</label>
    </ligand>
</feature>
<feature type="binding site" evidence="5">
    <location>
        <position position="388"/>
    </location>
    <ligand>
        <name>Cu(+)</name>
        <dbReference type="ChEBI" id="CHEBI:49552"/>
        <label>4</label>
    </ligand>
</feature>
<feature type="binding site" evidence="5">
    <location>
        <position position="391"/>
    </location>
    <ligand>
        <name>Cu(+)</name>
        <dbReference type="ChEBI" id="CHEBI:49552"/>
        <label>4</label>
    </ligand>
</feature>
<feature type="binding site" evidence="5">
    <location>
        <position position="499"/>
    </location>
    <ligand>
        <name>Cu(+)</name>
        <dbReference type="ChEBI" id="CHEBI:49552"/>
        <label>5</label>
    </ligand>
</feature>
<feature type="binding site" evidence="5">
    <location>
        <position position="502"/>
    </location>
    <ligand>
        <name>Cu(+)</name>
        <dbReference type="ChEBI" id="CHEBI:49552"/>
        <label>5</label>
    </ligand>
</feature>
<feature type="binding site" evidence="5">
    <location>
        <position position="575"/>
    </location>
    <ligand>
        <name>Cu(+)</name>
        <dbReference type="ChEBI" id="CHEBI:49552"/>
        <label>6</label>
    </ligand>
</feature>
<feature type="binding site" evidence="5">
    <location>
        <position position="578"/>
    </location>
    <ligand>
        <name>Cu(+)</name>
        <dbReference type="ChEBI" id="CHEBI:49552"/>
        <label>6</label>
    </ligand>
</feature>
<feature type="binding site" evidence="21">
    <location>
        <position position="1081"/>
    </location>
    <ligand>
        <name>ATP</name>
        <dbReference type="ChEBI" id="CHEBI:30616"/>
    </ligand>
</feature>
<feature type="binding site">
    <location>
        <position position="1301"/>
    </location>
    <ligand>
        <name>Mg(2+)</name>
        <dbReference type="ChEBI" id="CHEBI:18420"/>
    </ligand>
</feature>
<feature type="binding site">
    <location>
        <position position="1305"/>
    </location>
    <ligand>
        <name>Mg(2+)</name>
        <dbReference type="ChEBI" id="CHEBI:18420"/>
    </ligand>
</feature>
<feature type="modified residue" description="Phosphothreonine" evidence="46">
    <location>
        <position position="152"/>
    </location>
</feature>
<feature type="modified residue" description="Phosphoserine" evidence="46">
    <location>
        <position position="270"/>
    </location>
</feature>
<feature type="modified residue" description="Phosphothreonine" evidence="46">
    <location>
        <position position="327"/>
    </location>
</feature>
<feature type="modified residue" description="Phosphoserine" evidence="45 46">
    <location>
        <position position="339"/>
    </location>
</feature>
<feature type="modified residue" description="Phosphoserine" evidence="2">
    <location>
        <position position="353"/>
    </location>
</feature>
<feature type="modified residue" description="Phosphoserine" evidence="46">
    <location>
        <position position="357"/>
    </location>
</feature>
<feature type="modified residue" description="Phosphoserine" evidence="3">
    <location>
        <position position="362"/>
    </location>
</feature>
<feature type="modified residue" description="Phosphothreonine" evidence="2">
    <location>
        <position position="1212"/>
    </location>
</feature>
<feature type="modified residue" description="Phosphoserine" evidence="47">
    <location>
        <position position="1430"/>
    </location>
</feature>
<feature type="modified residue" description="Phosphoserine" evidence="47">
    <location>
        <position position="1432"/>
    </location>
</feature>
<feature type="modified residue" description="Phosphoserine" evidence="46">
    <location>
        <position position="1460"/>
    </location>
</feature>
<feature type="modified residue" description="Phosphoserine" evidence="46">
    <location>
        <position position="1463"/>
    </location>
</feature>
<feature type="modified residue" description="Phosphoserine" evidence="46">
    <location>
        <position position="1466"/>
    </location>
</feature>
<feature type="modified residue" description="Phosphoserine" evidence="46">
    <location>
        <position position="1469"/>
    </location>
</feature>
<feature type="modified residue" description="Phosphoserine" evidence="46">
    <location>
        <position position="1473"/>
    </location>
</feature>
<feature type="modified residue" description="Phosphoserine" evidence="3">
    <location>
        <position position="1476"/>
    </location>
</feature>
<feature type="modified residue" description="Phosphoserine" evidence="3">
    <location>
        <position position="1486"/>
    </location>
</feature>
<feature type="glycosylation site" description="N-linked (GlcNAc...) asparagine" evidence="4">
    <location>
        <position position="686"/>
    </location>
</feature>
<feature type="glycosylation site" description="N-linked (GlcNAc...) asparagine" evidence="4">
    <location>
        <position position="975"/>
    </location>
</feature>
<feature type="splice variant" id="VSP_000419" description="In isoform 1." evidence="37">
    <original>M</original>
    <variation>MRKLSIRKRDNNLLK</variation>
    <location>
        <position position="1"/>
    </location>
</feature>
<feature type="splice variant" id="VSP_000420" description="In isoform 2." evidence="37">
    <original>M</original>
    <variation>MRKLSIRKRDNNLLKPSSASSLGIAVSLGRPVLSRSSSGTVNLLEEVGLHIRDTAFSSTKLLEAISTVSAQVEELAVHNECY</variation>
    <location>
        <position position="1"/>
    </location>
</feature>
<feature type="splice variant" id="VSP_000421" description="In isoform 6." evidence="40">
    <original>M</original>
    <variation>MRKLSIRKRDNNLLKECNEEIK</variation>
    <location>
        <position position="1"/>
    </location>
</feature>
<feature type="splice variant" id="VSP_000424" description="In isoform 3." evidence="37 39">
    <location>
        <begin position="42"/>
        <end position="1038"/>
    </location>
</feature>
<feature type="splice variant" id="VSP_000422" description="In isoform 6." evidence="40">
    <original>DPKLQTPKTLQEAIDDMGFDAVIHNPDPL</original>
    <variation>AHWFGFAALDGICSNGCFICFCSTFFSSL</variation>
    <location>
        <begin position="53"/>
        <end position="81"/>
    </location>
</feature>
<feature type="splice variant" id="VSP_000423" description="In isoform 6." evidence="40">
    <location>
        <begin position="82"/>
        <end position="1499"/>
    </location>
</feature>
<feature type="splice variant" id="VSP_000425" description="In isoform 5." evidence="40">
    <location>
        <begin position="725"/>
        <end position="802"/>
    </location>
</feature>
<feature type="sequence variant" id="VAR_084344" description="In MNK; loss of protein expression." evidence="25">
    <original>E</original>
    <variation>V</variation>
    <location>
        <position position="628"/>
    </location>
</feature>
<feature type="sequence variant" id="VAR_000699" description="In MNK; dbSNP:rs72554639." evidence="31">
    <original>A</original>
    <variation>P</variation>
    <location>
        <position position="629"/>
    </location>
</feature>
<feature type="sequence variant" id="VAR_084345" description="In MNK; loss of protein expression." evidence="25">
    <original>K</original>
    <variation>R</variation>
    <location>
        <position position="633"/>
    </location>
</feature>
<feature type="sequence variant" id="VAR_009999" description="In OHS; dbSNP:rs151340631." evidence="33">
    <original>S</original>
    <variation>L</variation>
    <location>
        <position position="637"/>
    </location>
</feature>
<feature type="sequence variant" id="VAR_084346" description="In MNK; impaired copper-dependent trafficking from TGN to post-TGN compartments; subcellular location restricted to TGN; impaired copper transport activity." evidence="25">
    <original>S</original>
    <variation>Y</variation>
    <location>
        <position position="653"/>
    </location>
</feature>
<feature type="sequence variant" id="VAR_084347" description="In MNK; subcellular location restricted to post-TGN compartments; impaired copper transport activity; dbSNP:rs797045344." evidence="25">
    <original>G</original>
    <variation>R</variation>
    <location>
        <position position="666"/>
    </location>
</feature>
<feature type="sequence variant" id="VAR_016119" description="In dbSNP:rs2234935." evidence="27 30">
    <original>I</original>
    <variation>T</variation>
    <location>
        <position position="669"/>
    </location>
</feature>
<feature type="sequence variant" id="VAR_016120" description="In dbSNP:rs2234936.">
    <original>R</original>
    <variation>H</variation>
    <location>
        <position position="703"/>
    </location>
</feature>
<feature type="sequence variant" id="VAR_023261" description="In MNK; dbSNP:rs72554642." evidence="13">
    <original>L</original>
    <variation>R</variation>
    <location>
        <position position="706"/>
    </location>
</feature>
<feature type="sequence variant" id="VAR_000700" description="In MNK; impaired copper-dependent trafficking from TGN to post-TGN compartments; subcellular location restricted to TGN; impaired copper transport activity; dbSNP:rs72554644." evidence="25 31">
    <original>G</original>
    <variation>R</variation>
    <location>
        <position position="727"/>
    </location>
</feature>
<feature type="sequence variant" id="VAR_084348" description="In MNK; impaired copper-dependent trafficking from TGN to post-TGN compartments; subcellular location restricted to TGN; impaired copper transport activity; dbSNP:rs797045350." evidence="25">
    <original>G</original>
    <variation>D</variation>
    <location>
        <position position="728"/>
    </location>
</feature>
<feature type="sequence variant" id="VAR_084349" description="In MNK; has no effect on copper-dependent trafficking from TGN to post-TGN compartments; impaired copper transport activity." evidence="25">
    <original>S</original>
    <variation>P</variation>
    <location>
        <position position="761"/>
    </location>
</feature>
<feature type="sequence variant" id="VAR_010000" description="In dbSNP:rs2227291." evidence="28">
    <original>V</original>
    <variation>L</variation>
    <location>
        <position position="767"/>
    </location>
</feature>
<feature type="sequence variant" id="VAR_084350" description="In MNK; loss of protein expression." evidence="25">
    <original>K</original>
    <variation>N</variation>
    <location>
        <position position="802"/>
    </location>
</feature>
<feature type="sequence variant" id="VAR_023262" description="In MNK; loss of protein expression; dbSNP:rs367775730." evidence="16 25">
    <original>R</original>
    <variation>H</variation>
    <location>
        <position position="844"/>
    </location>
</feature>
<feature type="sequence variant" id="VAR_023263" description="In MNK." evidence="16">
    <original>G</original>
    <variation>R</variation>
    <location>
        <position position="853"/>
    </location>
</feature>
<feature type="sequence variant" id="VAR_023264" description="In MNK; decreased protein abundance; impaired copper transport activity." evidence="16 25">
    <original>G</original>
    <variation>V</variation>
    <location>
        <position position="860"/>
    </location>
</feature>
<feature type="sequence variant" id="VAR_010001" description="In MNK; increased protein abundance; does not affect interaction with ATOX1; does not affect interaction with COMMD1; increased localization at the plasma membrane; does not cycle back to TGN under conditions of copper depletion; dbSNP:rs72554646." evidence="7 23">
    <original>L</original>
    <variation>R</variation>
    <location>
        <position position="873"/>
    </location>
</feature>
<feature type="sequence variant" id="VAR_010002" description="In MNK; subcellular location restricted to post-TGN compartments; impaired copper transport activity." evidence="16 25">
    <original>G</original>
    <variation>E</variation>
    <location>
        <position position="876"/>
    </location>
</feature>
<feature type="sequence variant" id="VAR_023265" description="In MNK; loss of protein expression." evidence="16 25">
    <original>G</original>
    <variation>R</variation>
    <location>
        <position position="876"/>
    </location>
</feature>
<feature type="sequence variant" id="VAR_023266" description="In OHS; has no effect on copper-dependent trafficking; impaired copper transport activity." evidence="16 25">
    <original>Q</original>
    <variation>R</variation>
    <location>
        <position position="924"/>
    </location>
</feature>
<feature type="sequence variant" id="VAR_063882" description="In HMNX; demonstrates impaired intracellular trafficking compared to control with some of the mutant protein remaining in the Golgi apparatus after exposure to copper; dbSNP:rs267606673." evidence="22">
    <original>T</original>
    <variation>I</variation>
    <location>
        <position position="994"/>
    </location>
</feature>
<feature type="sequence variant" id="VAR_010003" description="In MNK; decreased protein abundance; increased protein degradation; does not affect interaction with ATOX1; does not affect interaction with COMMD1; subcellular location restricted to TGN; does not localizes to the plasma membrane in response to elevated copper levels; impaired copper transport activity." evidence="16 23 25">
    <original>C</original>
    <variation>R</variation>
    <location>
        <position position="1000"/>
    </location>
</feature>
<feature type="sequence variant" id="VAR_084351" description="In MNK; impaired copper-dependent trafficking from TGN to post-TGN compartments; subcellular location restricted to TGN; impaired copper transport activity; dbSNP:rs1569550143." evidence="25">
    <original>G</original>
    <variation>R</variation>
    <location>
        <position position="1005"/>
    </location>
</feature>
<feature type="sequence variant" id="VAR_000701" description="In MNK; dbSNP:rs72554651." evidence="31">
    <original>L</original>
    <variation>P</variation>
    <location>
        <position position="1006"/>
    </location>
</feature>
<feature type="sequence variant" id="VAR_023267" description="In MNK; impaired copper-dependent trafficking from TGN to post-TGN compartments; subcellular location restricted to TGN; impaired copper transport activity." evidence="16 25">
    <original>A</original>
    <variation>V</variation>
    <location>
        <position position="1007"/>
    </location>
</feature>
<feature type="sequence variant" id="VAR_023268" description="In MNK; subcellular location restricted to post-TGN compartments; impaired copper transport activity." evidence="16 25">
    <original>G</original>
    <variation>D</variation>
    <location>
        <position position="1015"/>
    </location>
</feature>
<feature type="sequence variant" id="VAR_000702" description="In MNK; dbSNP:rs72554652." evidence="31">
    <original>G</original>
    <variation>D</variation>
    <location>
        <position position="1019"/>
    </location>
</feature>
<feature type="sequence variant" id="VAR_084352" description="In MNK; loss of protein expression." evidence="25">
    <original>K</original>
    <variation>N</variation>
    <location>
        <position position="1037"/>
    </location>
</feature>
<feature type="sequence variant" id="VAR_023269" description="In MNK; impaired copper-dependent trafficking from TGN to post-TGN compartments; subcellular location restricted to TGN; impaired copper transport activity." evidence="16 25">
    <original>D</original>
    <variation>G</variation>
    <location>
        <position position="1044"/>
    </location>
</feature>
<feature type="sequence variant" id="VAR_068831" description="In MNK." evidence="24">
    <original>T</original>
    <variation>I</variation>
    <location>
        <position position="1048"/>
    </location>
</feature>
<feature type="sequence variant" id="VAR_023270" description="In MNK." evidence="16">
    <original>L</original>
    <variation>P</variation>
    <location>
        <position position="1100"/>
    </location>
</feature>
<feature type="sequence variant" id="VAR_023271" description="In MNK; dbSNP:rs72554654." evidence="13">
    <original>G</original>
    <variation>D</variation>
    <location>
        <position position="1118"/>
    </location>
</feature>
<feature type="sequence variant" id="VAR_023272" description="In MNK; decreased protein abundance; impaired copper-dependent trafficking from TGN to post-TGN compartments; subcellular location restricted to TGN; impaired copper transport activity; dbSNP:rs72554655." evidence="13 25">
    <original>G</original>
    <variation>R</variation>
    <location>
        <position position="1255"/>
    </location>
</feature>
<feature type="sequence variant" id="VAR_023273" description="In MNK; impaired copper-dependent trafficking from TGN to post-TGN compartments; subcellular location restricted to TGN; impaired copper transport activity." evidence="16 25">
    <original>K</original>
    <variation>E</variation>
    <location>
        <position position="1282"/>
    </location>
</feature>
<feature type="sequence variant" id="VAR_010004" description="In MNK; impaired copper-dependent trafficking from TGN to post-TGN compartments; subcellular location restricted to TGN; impaired copper transport activity." evidence="16 25">
    <original>G</original>
    <variation>E</variation>
    <location>
        <position position="1300"/>
    </location>
</feature>
<feature type="sequence variant" id="VAR_084353" description="In MNK; impaired copper-dependent trafficking from TGN to post-TGN compartments; subcellular location restricted to TGN; impaired copper transport activity; dbSNP:rs1557238588." evidence="25">
    <original>D</original>
    <variation>G</variation>
    <location>
        <position position="1301"/>
    </location>
</feature>
<feature type="sequence variant" id="VAR_084354" description="In MNK; impaired copper-dependent trafficking from TGN to post-TGN compartments; subcellular location restricted to TGN; impaired copper transport activity." evidence="25">
    <original>G</original>
    <variation>E</variation>
    <location>
        <position position="1302"/>
    </location>
</feature>
<feature type="sequence variant" id="VAR_010005" description="In MNK; dbSNP:rs72554657." evidence="28">
    <original>G</original>
    <variation>R</variation>
    <location>
        <position position="1302"/>
    </location>
</feature>
<feature type="sequence variant" id="VAR_010006" description="In MNK; impaired copper-dependent trafficking from TGN to post-TGN compartments; subcellular location restricted to TGN; impaired copper transport activity." evidence="16 25">
    <original>G</original>
    <variation>V</variation>
    <location>
        <position position="1302"/>
    </location>
</feature>
<feature type="sequence variant" id="VAR_023274" description="In MNK; impaired copper-dependent trafficking from TGN to post-TGN compartments; subcellular location restricted to TGN; impaired copper transport activity." evidence="16 25">
    <original>N</original>
    <variation>K</variation>
    <location>
        <position position="1304"/>
    </location>
</feature>
<feature type="sequence variant" id="VAR_063883" description="In OHS; has approximately 33% residual copper transport; increased protein abundance; increased localization at the plasma membrane; does not cycle back to TGN under conditions of copper depletion; does not affect interaction with ATOX1; does not affect interaction with COMMD1; dbSNP:rs151340632." evidence="19 23">
    <original>N</original>
    <variation>S</variation>
    <location>
        <position position="1304"/>
    </location>
</feature>
<feature type="sequence variant" id="VAR_010007" description="In MNK; impaired copper-dependent trafficking from TGN to post-TGN compartments; subcellular location restricted to TGN; impaired copper transport activity." evidence="16 25">
    <original>D</original>
    <variation>A</variation>
    <location>
        <position position="1305"/>
    </location>
</feature>
<feature type="sequence variant" id="VAR_084355" description="In MNK; impaired copper-dependent trafficking from TGN to post-TGN compartments; subcellular location restricted to TGN; impaired copper transport activity." evidence="25">
    <original>D</original>
    <variation>G</variation>
    <location>
        <position position="1305"/>
    </location>
</feature>
<feature type="sequence variant" id="VAR_084356" description="In MNK; impaired copper-dependent trafficking from TGN to post-TGN compartments; subcellular location restricted to TGN; impaired copper transport activity." evidence="25">
    <original>A</original>
    <variation>D</variation>
    <location>
        <position position="1308"/>
    </location>
</feature>
<feature type="sequence variant" id="VAR_023275" description="In MNK; impaired copper-dependent trafficking from TGN to post-TGN compartments; subcellular location restricted to TGN; impaired copper transport activity; dbSNP:rs797045390." evidence="16 25">
    <original>G</original>
    <variation>R</variation>
    <location>
        <position position="1315"/>
    </location>
</feature>
<feature type="sequence variant" id="VAR_023276" description="In MNK; subcellular location restricted to post-TGN compartments; impaired copper transport activity." evidence="16 25">
    <original>A</original>
    <variation>V</variation>
    <location>
        <position position="1325"/>
    </location>
</feature>
<feature type="sequence variant" id="VAR_023277" description="In MNK." evidence="12">
    <original>S</original>
    <variation>R</variation>
    <location>
        <position position="1344"/>
    </location>
</feature>
<feature type="sequence variant" id="VAR_023278" description="In MNK." evidence="12">
    <original>I</original>
    <variation>F</variation>
    <location>
        <position position="1345"/>
    </location>
</feature>
<feature type="sequence variant" id="VAR_080663" description="In dbSNP:rs4826245." evidence="15 36">
    <original>K</original>
    <variation>E</variation>
    <location>
        <position position="1350"/>
    </location>
</feature>
<feature type="sequence variant" id="VAR_010008" description="In MNK; decreased protein abundance; increased protein degradation; does not affect interaction with ATOX1; does not affect interaction with COMMD1; subcellular location restricted to TGN; does not localizes to the plasma membrane in response to elevated copper levels; impaired copper transport activity." evidence="8 23 25">
    <original>A</original>
    <variation>V</variation>
    <location>
        <position position="1362"/>
    </location>
</feature>
<feature type="sequence variant" id="VAR_023279" description="In MNK; loss of protein expression." evidence="16 25">
    <original>G</original>
    <variation>R</variation>
    <location>
        <position position="1369"/>
    </location>
</feature>
<feature type="sequence variant" id="VAR_084357" description="In MNK; loss of protein expression." evidence="25">
    <original>A</original>
    <variation>P</variation>
    <location>
        <position position="1373"/>
    </location>
</feature>
<feature type="sequence variant" id="VAR_063884" description="In HMNX; demonstrates impaired intracellular trafficking compared to control with some mutant protein remaining in the Golgi apparatus after exposure to copper; dbSNP:rs267606672." evidence="22">
    <original>P</original>
    <variation>S</variation>
    <location>
        <position position="1386"/>
    </location>
</feature>
<feature type="sequence variant" id="VAR_084358" description="In MNK; impaired copper-dependent trafficking from TGN to post-TGN compartments; subcellular location restricted to TGN; impaired copper transport activity." evidence="25">
    <original>M</original>
    <variation>T</variation>
    <location>
        <position position="1393"/>
    </location>
</feature>
<feature type="sequence variant" id="VAR_023280" description="In MNK; impaired copper-dependent trafficking from TGN to post-TGN compartments; subcellular location restricted to TGN; impaired copper transport activity." evidence="16 25">
    <original>S</original>
    <variation>F</variation>
    <location>
        <position position="1397"/>
    </location>
</feature>
<feature type="sequence variant" id="VAR_016121" description="In dbSNP:rs2234938.">
    <original>I</original>
    <variation>V</variation>
    <location>
        <position position="1464"/>
    </location>
</feature>
<feature type="mutagenesis site" description="Impairs Cu(+)-bridged heterodimer formation with ATOX1 while increasing the reactivity toward cisplatin." evidence="26">
    <original>C</original>
    <variation>A</variation>
    <location>
        <position position="22"/>
    </location>
</feature>
<feature type="mutagenesis site" description="Impairs tyrosinase activity involved in melanin synthesis." evidence="11">
    <original>D</original>
    <variation>E</variation>
    <location>
        <position position="1044"/>
    </location>
</feature>
<feature type="mutagenesis site" description="Loss of relocalization to the trans-Golgi." evidence="10">
    <original>LL</original>
    <variation>AA</variation>
    <location>
        <begin position="1487"/>
        <end position="1488"/>
    </location>
</feature>
<feature type="sequence conflict" description="In Ref. 4; no nucleotide entry." evidence="40" ref="4">
    <original>V</original>
    <variation>A</variation>
    <location>
        <position position="10"/>
    </location>
</feature>
<feature type="sequence conflict" description="In Ref. 10; AAA16974." evidence="40" ref="10">
    <original>V</original>
    <variation>E</variation>
    <location>
        <position position="36"/>
    </location>
</feature>
<feature type="sequence conflict" description="In Ref. 1; AAA35580 and 8; AAA96010." evidence="40" ref="1 8">
    <original>E</original>
    <variation>V</variation>
    <location>
        <position position="336"/>
    </location>
</feature>
<feature type="sequence conflict" description="In Ref. 6; CAB08162." evidence="40" ref="6">
    <original>D</original>
    <variation>G</variation>
    <location>
        <position position="446"/>
    </location>
</feature>
<feature type="sequence conflict" description="In Ref. 6; CAB08162." evidence="40" ref="6">
    <original>S</original>
    <variation>G</variation>
    <location>
        <position position="624"/>
    </location>
</feature>
<feature type="sequence conflict" description="In Ref. 6; CAB08162." evidence="40" ref="6">
    <original>F</original>
    <variation>V</variation>
    <location>
        <position position="725"/>
    </location>
</feature>
<feature type="sequence conflict" description="In Ref. 6; CAB08162." evidence="40" ref="6">
    <original>S</original>
    <variation>R</variation>
    <location>
        <position position="833"/>
    </location>
</feature>
<feature type="sequence conflict" description="In Ref. 4; no nucleotide entry." evidence="40" ref="4">
    <original>E</original>
    <variation>K</variation>
    <location>
        <position position="1099"/>
    </location>
</feature>
<feature type="sequence conflict" description="In Ref. 6; CAB08162." evidence="40" ref="6">
    <original>N</original>
    <variation>S</variation>
    <location>
        <position position="1171"/>
    </location>
</feature>
<feature type="sequence conflict" description="In Ref. 4; no nucleotide entry." evidence="40" ref="4">
    <original>Y</original>
    <variation>C</variation>
    <location>
        <position position="1178"/>
    </location>
</feature>
<feature type="sequence conflict" description="In Ref. 1; AAA35580, 3; CAB94714 and 8; AAA96010." evidence="40" ref="1 3 8">
    <original>Y</original>
    <variation>H</variation>
    <location>
        <position position="1178"/>
    </location>
</feature>
<feature type="sequence conflict" description="In Ref. 6; CAB08162." evidence="40" ref="6">
    <original>D</original>
    <variation>G</variation>
    <location>
        <position position="1220"/>
    </location>
</feature>
<feature type="sequence conflict" description="In Ref. 4; no nucleotide entry." evidence="40" ref="4">
    <original>R</original>
    <variation>W</variation>
    <location>
        <position position="1295"/>
    </location>
</feature>
<feature type="sequence conflict" description="In Ref. 4; no nucleotide entry." evidence="40" ref="4">
    <original>N</original>
    <variation>D</variation>
    <location>
        <position position="1313"/>
    </location>
</feature>
<feature type="sequence conflict" description="In Ref. 6; CAB08162." evidence="40" ref="6">
    <original>N</original>
    <variation>D</variation>
    <location>
        <position position="1336"/>
    </location>
</feature>
<feature type="sequence conflict" description="In Ref. 6; CAB08162." evidence="40" ref="6">
    <original>V</original>
    <variation>M</variation>
    <location>
        <position position="1376"/>
    </location>
</feature>
<feature type="sequence conflict" description="In Ref. 4; no nucleotide entry." evidence="40" ref="4">
    <original>S</original>
    <variation>P</variation>
    <location>
        <position position="1396"/>
    </location>
</feature>
<feature type="sequence conflict" description="In Ref. 6; CAB08160." evidence="40" ref="6">
    <original>L</original>
    <variation>R</variation>
    <location>
        <position position="1409"/>
    </location>
</feature>
<feature type="sequence conflict" description="In Ref. 4; no nucleotide entry." evidence="40" ref="4">
    <original>R</original>
    <variation>W</variation>
    <location>
        <position position="1455"/>
    </location>
</feature>
<feature type="turn" evidence="49">
    <location>
        <begin position="4"/>
        <end position="6"/>
    </location>
</feature>
<feature type="strand" evidence="60">
    <location>
        <begin position="8"/>
        <end position="14"/>
    </location>
</feature>
<feature type="helix" evidence="60">
    <location>
        <begin position="20"/>
        <end position="31"/>
    </location>
</feature>
<feature type="strand" evidence="49">
    <location>
        <begin position="33"/>
        <end position="35"/>
    </location>
</feature>
<feature type="strand" evidence="60">
    <location>
        <begin position="36"/>
        <end position="42"/>
    </location>
</feature>
<feature type="turn" evidence="60">
    <location>
        <begin position="43"/>
        <end position="46"/>
    </location>
</feature>
<feature type="strand" evidence="60">
    <location>
        <begin position="47"/>
        <end position="52"/>
    </location>
</feature>
<feature type="turn" evidence="60">
    <location>
        <begin position="54"/>
        <end position="56"/>
    </location>
</feature>
<feature type="helix" evidence="60">
    <location>
        <begin position="59"/>
        <end position="68"/>
    </location>
</feature>
<feature type="strand" evidence="60">
    <location>
        <begin position="73"/>
        <end position="77"/>
    </location>
</feature>
<feature type="strand" evidence="61">
    <location>
        <begin position="84"/>
        <end position="91"/>
    </location>
</feature>
<feature type="helix" evidence="61">
    <location>
        <begin position="100"/>
        <end position="109"/>
    </location>
</feature>
<feature type="strand" evidence="61">
    <location>
        <begin position="113"/>
        <end position="119"/>
    </location>
</feature>
<feature type="turn" evidence="61">
    <location>
        <begin position="120"/>
        <end position="123"/>
    </location>
</feature>
<feature type="strand" evidence="61">
    <location>
        <begin position="124"/>
        <end position="129"/>
    </location>
</feature>
<feature type="turn" evidence="61">
    <location>
        <begin position="131"/>
        <end position="133"/>
    </location>
</feature>
<feature type="helix" evidence="61">
    <location>
        <begin position="136"/>
        <end position="142"/>
    </location>
</feature>
<feature type="strand" evidence="50">
    <location>
        <begin position="165"/>
        <end position="169"/>
    </location>
</feature>
<feature type="strand" evidence="50">
    <location>
        <begin position="171"/>
        <end position="177"/>
    </location>
</feature>
<feature type="turn" evidence="50">
    <location>
        <begin position="180"/>
        <end position="182"/>
    </location>
</feature>
<feature type="helix" evidence="50">
    <location>
        <begin position="187"/>
        <end position="194"/>
    </location>
</feature>
<feature type="strand" evidence="50">
    <location>
        <begin position="199"/>
        <end position="204"/>
    </location>
</feature>
<feature type="turn" evidence="50">
    <location>
        <begin position="207"/>
        <end position="209"/>
    </location>
</feature>
<feature type="strand" evidence="50">
    <location>
        <begin position="210"/>
        <end position="215"/>
    </location>
</feature>
<feature type="turn" evidence="51">
    <location>
        <begin position="217"/>
        <end position="219"/>
    </location>
</feature>
<feature type="helix" evidence="50">
    <location>
        <begin position="222"/>
        <end position="231"/>
    </location>
</feature>
<feature type="strand" evidence="52">
    <location>
        <begin position="236"/>
        <end position="238"/>
    </location>
</feature>
<feature type="turn" evidence="50">
    <location>
        <begin position="242"/>
        <end position="244"/>
    </location>
</feature>
<feature type="strand" evidence="55">
    <location>
        <begin position="277"/>
        <end position="285"/>
    </location>
</feature>
<feature type="helix" evidence="55">
    <location>
        <begin position="288"/>
        <end position="299"/>
    </location>
</feature>
<feature type="strand" evidence="55">
    <location>
        <begin position="305"/>
        <end position="311"/>
    </location>
</feature>
<feature type="turn" evidence="55">
    <location>
        <begin position="312"/>
        <end position="315"/>
    </location>
</feature>
<feature type="strand" evidence="55">
    <location>
        <begin position="316"/>
        <end position="321"/>
    </location>
</feature>
<feature type="strand" evidence="56">
    <location>
        <begin position="324"/>
        <end position="326"/>
    </location>
</feature>
<feature type="helix" evidence="55">
    <location>
        <begin position="329"/>
        <end position="336"/>
    </location>
</feature>
<feature type="turn" evidence="55">
    <location>
        <begin position="340"/>
        <end position="342"/>
    </location>
</feature>
<feature type="strand" evidence="55">
    <location>
        <begin position="344"/>
        <end position="346"/>
    </location>
</feature>
<feature type="strand" evidence="48">
    <location>
        <begin position="377"/>
        <end position="384"/>
    </location>
</feature>
<feature type="helix" evidence="48">
    <location>
        <begin position="388"/>
        <end position="400"/>
    </location>
</feature>
<feature type="strand" evidence="48">
    <location>
        <begin position="408"/>
        <end position="411"/>
    </location>
</feature>
<feature type="turn" evidence="48">
    <location>
        <begin position="412"/>
        <end position="415"/>
    </location>
</feature>
<feature type="strand" evidence="48">
    <location>
        <begin position="416"/>
        <end position="421"/>
    </location>
</feature>
<feature type="turn" evidence="48">
    <location>
        <begin position="423"/>
        <end position="425"/>
    </location>
</feature>
<feature type="helix" evidence="48">
    <location>
        <begin position="428"/>
        <end position="438"/>
    </location>
</feature>
<feature type="strand" evidence="48">
    <location>
        <begin position="441"/>
        <end position="446"/>
    </location>
</feature>
<feature type="strand" evidence="53">
    <location>
        <begin position="488"/>
        <end position="495"/>
    </location>
</feature>
<feature type="helix" evidence="53">
    <location>
        <begin position="497"/>
        <end position="499"/>
    </location>
</feature>
<feature type="helix" evidence="53">
    <location>
        <begin position="502"/>
        <end position="510"/>
    </location>
</feature>
<feature type="strand" evidence="53">
    <location>
        <begin position="513"/>
        <end position="518"/>
    </location>
</feature>
<feature type="turn" evidence="53">
    <location>
        <begin position="523"/>
        <end position="526"/>
    </location>
</feature>
<feature type="strand" evidence="53">
    <location>
        <begin position="527"/>
        <end position="532"/>
    </location>
</feature>
<feature type="turn" evidence="53">
    <location>
        <begin position="534"/>
        <end position="536"/>
    </location>
</feature>
<feature type="helix" evidence="53">
    <location>
        <begin position="539"/>
        <end position="549"/>
    </location>
</feature>
<feature type="strand" evidence="53">
    <location>
        <begin position="553"/>
        <end position="557"/>
    </location>
</feature>
<feature type="strand" evidence="54">
    <location>
        <begin position="566"/>
        <end position="571"/>
    </location>
</feature>
<feature type="turn" evidence="54">
    <location>
        <begin position="575"/>
        <end position="577"/>
    </location>
</feature>
<feature type="helix" evidence="54">
    <location>
        <begin position="578"/>
        <end position="586"/>
    </location>
</feature>
<feature type="strand" evidence="54">
    <location>
        <begin position="592"/>
        <end position="598"/>
    </location>
</feature>
<feature type="turn" evidence="54">
    <location>
        <begin position="599"/>
        <end position="602"/>
    </location>
</feature>
<feature type="strand" evidence="54">
    <location>
        <begin position="603"/>
        <end position="608"/>
    </location>
</feature>
<feature type="turn" evidence="54">
    <location>
        <begin position="610"/>
        <end position="613"/>
    </location>
</feature>
<feature type="helix" evidence="54">
    <location>
        <begin position="614"/>
        <end position="626"/>
    </location>
</feature>
<feature type="strand" evidence="54">
    <location>
        <begin position="628"/>
        <end position="633"/>
    </location>
</feature>
<feature type="helix" evidence="57">
    <location>
        <begin position="808"/>
        <end position="814"/>
    </location>
</feature>
<feature type="strand" evidence="57">
    <location>
        <begin position="818"/>
        <end position="824"/>
    </location>
</feature>
<feature type="strand" evidence="57">
    <location>
        <begin position="826"/>
        <end position="828"/>
    </location>
</feature>
<feature type="strand" evidence="57">
    <location>
        <begin position="833"/>
        <end position="838"/>
    </location>
</feature>
<feature type="turn" evidence="57">
    <location>
        <begin position="839"/>
        <end position="841"/>
    </location>
</feature>
<feature type="strand" evidence="57">
    <location>
        <begin position="847"/>
        <end position="849"/>
    </location>
</feature>
<feature type="strand" evidence="57">
    <location>
        <begin position="860"/>
        <end position="862"/>
    </location>
</feature>
<feature type="strand" evidence="57">
    <location>
        <begin position="868"/>
        <end position="870"/>
    </location>
</feature>
<feature type="turn" evidence="57">
    <location>
        <begin position="872"/>
        <end position="875"/>
    </location>
</feature>
<feature type="strand" evidence="57">
    <location>
        <begin position="887"/>
        <end position="889"/>
    </location>
</feature>
<feature type="strand" evidence="57">
    <location>
        <begin position="894"/>
        <end position="898"/>
    </location>
</feature>
<feature type="strand" evidence="57">
    <location>
        <begin position="901"/>
        <end position="904"/>
    </location>
</feature>
<feature type="turn" evidence="57">
    <location>
        <begin position="908"/>
        <end position="910"/>
    </location>
</feature>
<feature type="helix" evidence="57">
    <location>
        <begin position="912"/>
        <end position="919"/>
    </location>
</feature>
<feature type="turn" evidence="57">
    <location>
        <begin position="920"/>
        <end position="923"/>
    </location>
</feature>
<feature type="strand" evidence="58">
    <location>
        <begin position="1055"/>
        <end position="1061"/>
    </location>
</feature>
<feature type="turn" evidence="58">
    <location>
        <begin position="1065"/>
        <end position="1067"/>
    </location>
</feature>
<feature type="helix" evidence="58">
    <location>
        <begin position="1070"/>
        <end position="1079"/>
    </location>
</feature>
<feature type="helix" evidence="58">
    <location>
        <begin position="1080"/>
        <end position="1082"/>
    </location>
</feature>
<feature type="strand" evidence="58">
    <location>
        <begin position="1083"/>
        <end position="1085"/>
    </location>
</feature>
<feature type="helix" evidence="58">
    <location>
        <begin position="1087"/>
        <end position="1100"/>
    </location>
</feature>
<feature type="strand" evidence="58">
    <location>
        <begin position="1112"/>
        <end position="1114"/>
    </location>
</feature>
<feature type="turn" evidence="58">
    <location>
        <begin position="1115"/>
        <end position="1117"/>
    </location>
</feature>
<feature type="strand" evidence="58">
    <location>
        <begin position="1118"/>
        <end position="1123"/>
    </location>
</feature>
<feature type="helix" evidence="58">
    <location>
        <begin position="1127"/>
        <end position="1129"/>
    </location>
</feature>
<feature type="turn" evidence="59">
    <location>
        <begin position="1135"/>
        <end position="1139"/>
    </location>
</feature>
<feature type="turn" evidence="58">
    <location>
        <begin position="1150"/>
        <end position="1153"/>
    </location>
</feature>
<feature type="strand" evidence="59">
    <location>
        <begin position="1161"/>
        <end position="1166"/>
    </location>
</feature>
<feature type="turn" evidence="58">
    <location>
        <begin position="1167"/>
        <end position="1171"/>
    </location>
</feature>
<feature type="helix" evidence="58">
    <location>
        <begin position="1172"/>
        <end position="1174"/>
    </location>
</feature>
<feature type="strand" evidence="58">
    <location>
        <begin position="1178"/>
        <end position="1183"/>
    </location>
</feature>
<feature type="helix" evidence="58">
    <location>
        <begin position="1185"/>
        <end position="1191"/>
    </location>
</feature>
<feature type="helix" evidence="58">
    <location>
        <begin position="1197"/>
        <end position="1208"/>
    </location>
</feature>
<feature type="strand" evidence="58">
    <location>
        <begin position="1212"/>
        <end position="1218"/>
    </location>
</feature>
<feature type="strand" evidence="58">
    <location>
        <begin position="1221"/>
        <end position="1229"/>
    </location>
</feature>
<organism>
    <name type="scientific">Homo sapiens</name>
    <name type="common">Human</name>
    <dbReference type="NCBI Taxonomy" id="9606"/>
    <lineage>
        <taxon>Eukaryota</taxon>
        <taxon>Metazoa</taxon>
        <taxon>Chordata</taxon>
        <taxon>Craniata</taxon>
        <taxon>Vertebrata</taxon>
        <taxon>Euteleostomi</taxon>
        <taxon>Mammalia</taxon>
        <taxon>Eutheria</taxon>
        <taxon>Euarchontoglires</taxon>
        <taxon>Primates</taxon>
        <taxon>Haplorrhini</taxon>
        <taxon>Catarrhini</taxon>
        <taxon>Hominidae</taxon>
        <taxon>Homo</taxon>
    </lineage>
</organism>
<gene>
    <name evidence="38 43" type="primary">ATP7A</name>
    <name type="synonym">MC1</name>
    <name type="synonym">MNK</name>
</gene>
<comment type="function">
    <text evidence="3 9 11 20 21 25 26">ATP-driven copper (Cu(+)) ion pump that plays an important role in intracellular copper ion homeostasis (PubMed:10419525, PubMed:11092760, PubMed:28389643). Within a catalytic cycle, acquires Cu(+) ion from donor protein on the cytoplasmic side of the membrane and delivers it to acceptor protein on the lumenal side. The transfer of Cu(+) ion across the membrane is coupled to ATP hydrolysis and is associated with a transient phosphorylation that shifts the pump conformation from inward-facing to outward-facing state (PubMed:10419525, PubMed:19453293, PubMed:19917612, PubMed:28389643, PubMed:31283225). Under physiological conditions, at low cytosolic copper concentration, it is localized at the trans-Golgi network (TGN) where it transfers Cu(+) ions to cuproenzymes of the secretory pathway (PubMed:11092760, PubMed:28389643). Upon elevated cytosolic copper concentrations, it relocalizes to the plasma membrane where it is responsible for the export of excess Cu(+) ions (PubMed:10419525, PubMed:28389643). May play a dual role in neuron function and survival by regulating cooper efflux and neuronal transmission at the synapse as well as by supplying Cu(+) ions to enzymes such as PAM, TYR and SOD3 (By similarity) (PubMed:28389643). In the melanosomes of pigmented cells, provides copper cofactor to TYR to form an active TYR holoenzyme for melanin biosynthesis (By similarity).</text>
</comment>
<comment type="catalytic activity">
    <reaction evidence="9">
        <text>Cu(+)(in) + ATP + H2O = Cu(+)(out) + ADP + phosphate + H(+)</text>
        <dbReference type="Rhea" id="RHEA:25792"/>
        <dbReference type="ChEBI" id="CHEBI:15377"/>
        <dbReference type="ChEBI" id="CHEBI:15378"/>
        <dbReference type="ChEBI" id="CHEBI:30616"/>
        <dbReference type="ChEBI" id="CHEBI:43474"/>
        <dbReference type="ChEBI" id="CHEBI:49552"/>
        <dbReference type="ChEBI" id="CHEBI:456216"/>
        <dbReference type="EC" id="7.2.2.8"/>
    </reaction>
    <physiologicalReaction direction="left-to-right" evidence="41 42">
        <dbReference type="Rhea" id="RHEA:25793"/>
    </physiologicalReaction>
</comment>
<comment type="biophysicochemical properties">
    <kinetics>
        <KM evidence="9">4 uM for Cu(+) ion</KM>
        <Vmax evidence="9">1.15 nmol/min/mg enzyme toward Cu(+) ion</Vmax>
    </kinetics>
</comment>
<comment type="subunit">
    <text evidence="3 17 18 23 26">Monomer. Interacts with PDZD11 (PubMed:16051599). Interacts with ATOX1 and COMMD1 (PubMed:19453293, PubMed:21667063, PubMed:31283225). Interacts with TYRP1 (By similarity). Directly interacts with SOD3; this interaction is copper-dependent and is required for SOD3 activity.</text>
</comment>
<comment type="interaction">
    <interactant intactId="EBI-7706409">
        <id>Q04656</id>
    </interactant>
    <interactant intactId="EBI-8589586">
        <id>P09172</id>
        <label>DBH</label>
    </interactant>
    <organismsDiffer>false</organismsDiffer>
    <experiments>2</experiments>
</comment>
<comment type="interaction">
    <interactant intactId="EBI-7706409">
        <id>Q04656</id>
    </interactant>
    <interactant intactId="EBI-1644207">
        <id>Q5EBL8</id>
        <label>PDZD11</label>
    </interactant>
    <organismsDiffer>false</organismsDiffer>
    <experiments>4</experiments>
</comment>
<comment type="subcellular location">
    <subcellularLocation>
        <location evidence="10 25 32 34">Golgi apparatus</location>
        <location evidence="10 25 32 34">trans-Golgi network membrane</location>
        <topology evidence="4">Multi-pass membrane protein</topology>
    </subcellularLocation>
    <subcellularLocation>
        <location evidence="10 25 32">Cell membrane</location>
        <topology evidence="4">Multi-pass membrane protein</topology>
    </subcellularLocation>
    <subcellularLocation>
        <location evidence="3">Melanosome membrane</location>
        <topology evidence="4">Multi-pass membrane protein</topology>
    </subcellularLocation>
    <subcellularLocation>
        <location evidence="3">Early endosome membrane</location>
        <topology evidence="4">Multi-pass membrane protein</topology>
    </subcellularLocation>
    <subcellularLocation>
        <location evidence="2">Cell projection</location>
        <location evidence="2">Axon</location>
    </subcellularLocation>
    <subcellularLocation>
        <location evidence="2">Cell projection</location>
        <location evidence="2">Dendrite</location>
    </subcellularLocation>
    <subcellularLocation>
        <location evidence="2">Postsynaptic density</location>
    </subcellularLocation>
    <text evidence="2 3 32">Cycles constitutively between the TGN and the plasma membrane (PubMed:9147644). Predominantly found in the TGN and relocalized to the plasma membrane in response to elevated copper levels. Targeting into melanosomes is regulated by BLOC-1 complex (By similarity). In response to glutamate, translocates to neuron processes with a minor fraction at extrasynaptic sites (By similarity).</text>
</comment>
<comment type="subcellular location">
    <molecule>Isoform 3</molecule>
    <subcellularLocation>
        <location evidence="40">Cytoplasm</location>
        <location evidence="40">Cytosol</location>
    </subcellularLocation>
</comment>
<comment type="subcellular location">
    <molecule>Isoform 5</molecule>
    <subcellularLocation>
        <location evidence="34">Endoplasmic reticulum</location>
    </subcellularLocation>
</comment>
<comment type="alternative products">
    <event type="alternative splicing"/>
    <isoform>
        <id>Q04656-1</id>
        <name>4</name>
        <sequence type="displayed"/>
    </isoform>
    <isoform>
        <id>Q04656-2</id>
        <name>1</name>
        <sequence type="described" ref="VSP_000419"/>
    </isoform>
    <isoform>
        <id>Q04656-3</id>
        <name>2</name>
        <sequence type="described" ref="VSP_000420"/>
    </isoform>
    <isoform>
        <id>Q04656-4</id>
        <name>3</name>
        <name>2-16</name>
        <sequence type="described" ref="VSP_000424"/>
    </isoform>
    <isoform>
        <id>Q04656-5</id>
        <name>5</name>
        <sequence type="described" ref="VSP_000425"/>
    </isoform>
    <isoform>
        <id>Q04656-6</id>
        <name>6</name>
        <name>NML45</name>
        <sequence type="described" ref="VSP_000421 VSP_000422 VSP_000423"/>
    </isoform>
</comment>
<comment type="tissue specificity">
    <text evidence="18 29 30">Widely expressed including in heart, brain, lung, muscle, kidney, pancreas, and to a lesser extent placenta (PubMed:8490646, PubMed:8490659). Expressed in fibroblasts, aortic smooth muscle cells, aortic endothelial cells and umbilical vein endothelial cells (at protein level) (PubMed:16371425).</text>
</comment>
<comment type="tissue specificity">
    <molecule>Isoform 3</molecule>
    <text evidence="35">Expressed in cerebellum and brain cortex.</text>
</comment>
<comment type="domain">
    <text evidence="21">The nucleotide-binding domain consists of a twisted six-stranded antiparallel beta-sheet flanked by two pairs of alpha-helices, forming a hydrophobic pocket that interacts with the adenine ring of ATP. The ATP binding site comprises residues located in alpha-1 and alpha-2 helices and beta-2 and beta-3 strands, which are involved in van der Waal's interactions, and Glu-1081 which forms a hydrogen bond with the adenine ring.</text>
</comment>
<comment type="domain">
    <text evidence="9 20 26">The heavy-metal-associated domain (HMA) coordinates a Cu(+) ion via the cysteine residues within the CXXC motif. The transfer of Cu(+) ion from ATOX1 to ATP7A involves the formation of a three-coordinate Cu(+)-bridged heterodimer where the metal is shared between the two metal binding sites of ATOX1 and ATP7A. The Cu(+) ion appears to switch between two coordination modes, forming two links with one protein and one with the other. Cisplatin, a chemotherapeutic drug, can bind the CXXC motif and hinder the release of Cu(+) ion.</text>
</comment>
<comment type="domain">
    <text evidence="3">Contains three di-leucine motifs in the C-terminus which are required for recycling from the plasma membrane to the TGN. The di-leucine 1487-Leu-Leu-1488 motif mediates endocytosis at the plasma membrane, whereas the di-leucine 1467-Leu-Leu-1468 motif is a sorting signal for retrograde trafficking to TGN via early endosomes.</text>
</comment>
<comment type="disease" evidence="6 7 8 12 13 16 23 24 25 28 31">
    <disease id="DI-00706">
        <name>Menkes disease</name>
        <acronym>MNK</acronym>
        <description>An X-linked recessive disorder of copper metabolism characterized by generalized copper deficiency. MNKD results in progressive neurodegeneration and connective-tissue disturbances: focal cerebral and cerebellar degeneration, early growth retardation, peculiar hair, hypopigmentation, cutis laxa, vascular complications and death in early childhood. The clinical features result from the dysfunction of several copper-dependent enzymes. A mild form of the disease has been described, in which cerebellar ataxia and moderate developmental delay predominate.</description>
        <dbReference type="MIM" id="309400"/>
    </disease>
    <text>The disease is caused by variants affecting the gene represented in this entry.</text>
</comment>
<comment type="disease" evidence="14 19 23 25 33">
    <disease id="DI-00880">
        <name>Occipital horn syndrome</name>
        <acronym>OHS</acronym>
        <description>An X-linked recessive disorder of copper metabolism. Common features are unusual facial appearance, skeletal abnormalities, chronic diarrhea and genitourinary defects. The skeletal abnormalities include occipital horns, short, broad clavicles, deformed radii, ulnae and humeri, narrowing of the rib cage, undercalcified long bones with thin cortical walls and coxa valga.</description>
        <dbReference type="MIM" id="304150"/>
    </disease>
    <text>The disease is caused by variants affecting the gene represented in this entry.</text>
</comment>
<comment type="disease" evidence="22">
    <disease id="DI-02799">
        <name>Neuronopathy, distal hereditary motor, X-linked</name>
        <acronym>HMNX</acronym>
        <description>A form of distal hereditary motor neuronopathy, a heterogeneous group of neuromuscular disorders caused by selective degeneration of motor neurons in the anterior horn of the spinal cord, without sensory deficit in the posterior horn. The overall clinical picture consists of a classical distal muscular atrophy syndrome in the legs without clinical sensory loss. The disease starts with weakness and wasting of distal muscles of the anterior tibial and peroneal compartments of the legs. Later on, weakness and atrophy may expand to the proximal muscles of the lower limbs and/or to the distal upper limbs.</description>
        <dbReference type="MIM" id="300489"/>
    </disease>
    <text>The disease is caused by variants affecting the gene represented in this entry.</text>
</comment>
<comment type="miscellaneous">
    <molecule>Isoform 3</molecule>
    <text evidence="40">Lacks 6 transmembrane regions and 5 heavy-metal-associated (HMA) domains.</text>
</comment>
<comment type="miscellaneous">
    <molecule>Isoform 5</molecule>
    <text evidence="40">Lacks the transmembrane domains 3 and 4. Expressed at a low level in several tissues of normal individuals and is the only isoform found in patients with OHS.</text>
</comment>
<comment type="miscellaneous">
    <molecule>Isoform 6</molecule>
    <text evidence="40">Lacks all transmembrane regions and 5 heavy-metal-associated (HMA) domains, but has a putative nuclear localization signal attached at the N-terminus.</text>
</comment>
<comment type="similarity">
    <text evidence="40">Belongs to the cation transport ATPase (P-type) (TC 3.A.3) family. Type IB subfamily.</text>
</comment>
<comment type="online information" name="Protein Spotlight">
    <link uri="https://www.proteinspotlight.org/back_issues/079"/>
    <text>Heavy metal - Issue 79 of February 2007</text>
</comment>
<evidence type="ECO:0000250" key="1"/>
<evidence type="ECO:0000250" key="2">
    <source>
        <dbReference type="UniProtKB" id="P70705"/>
    </source>
</evidence>
<evidence type="ECO:0000250" key="3">
    <source>
        <dbReference type="UniProtKB" id="Q64430"/>
    </source>
</evidence>
<evidence type="ECO:0000255" key="4"/>
<evidence type="ECO:0000255" key="5">
    <source>
        <dbReference type="PROSITE-ProRule" id="PRU00280"/>
    </source>
</evidence>
<evidence type="ECO:0000269" key="6">
    <source>
    </source>
</evidence>
<evidence type="ECO:0000269" key="7">
    <source>
    </source>
</evidence>
<evidence type="ECO:0000269" key="8">
    <source>
    </source>
</evidence>
<evidence type="ECO:0000269" key="9">
    <source>
    </source>
</evidence>
<evidence type="ECO:0000269" key="10">
    <source>
    </source>
</evidence>
<evidence type="ECO:0000269" key="11">
    <source>
    </source>
</evidence>
<evidence type="ECO:0000269" key="12">
    <source>
    </source>
</evidence>
<evidence type="ECO:0000269" key="13">
    <source>
    </source>
</evidence>
<evidence type="ECO:0000269" key="14">
    <source>
    </source>
</evidence>
<evidence type="ECO:0000269" key="15">
    <source>
    </source>
</evidence>
<evidence type="ECO:0000269" key="16">
    <source>
    </source>
</evidence>
<evidence type="ECO:0000269" key="17">
    <source>
    </source>
</evidence>
<evidence type="ECO:0000269" key="18">
    <source>
    </source>
</evidence>
<evidence type="ECO:0000269" key="19">
    <source>
    </source>
</evidence>
<evidence type="ECO:0000269" key="20">
    <source>
    </source>
</evidence>
<evidence type="ECO:0000269" key="21">
    <source>
    </source>
</evidence>
<evidence type="ECO:0000269" key="22">
    <source>
    </source>
</evidence>
<evidence type="ECO:0000269" key="23">
    <source>
    </source>
</evidence>
<evidence type="ECO:0000269" key="24">
    <source>
    </source>
</evidence>
<evidence type="ECO:0000269" key="25">
    <source>
    </source>
</evidence>
<evidence type="ECO:0000269" key="26">
    <source>
    </source>
</evidence>
<evidence type="ECO:0000269" key="27">
    <source>
    </source>
</evidence>
<evidence type="ECO:0000269" key="28">
    <source>
    </source>
</evidence>
<evidence type="ECO:0000269" key="29">
    <source>
    </source>
</evidence>
<evidence type="ECO:0000269" key="30">
    <source>
    </source>
</evidence>
<evidence type="ECO:0000269" key="31">
    <source>
    </source>
</evidence>
<evidence type="ECO:0000269" key="32">
    <source>
    </source>
</evidence>
<evidence type="ECO:0000269" key="33">
    <source>
    </source>
</evidence>
<evidence type="ECO:0000269" key="34">
    <source>
    </source>
</evidence>
<evidence type="ECO:0000269" key="35">
    <source>
    </source>
</evidence>
<evidence type="ECO:0000269" key="36">
    <source ref="7"/>
</evidence>
<evidence type="ECO:0000303" key="37">
    <source>
    </source>
</evidence>
<evidence type="ECO:0000303" key="38">
    <source>
    </source>
</evidence>
<evidence type="ECO:0000303" key="39">
    <source>
    </source>
</evidence>
<evidence type="ECO:0000305" key="40"/>
<evidence type="ECO:0000305" key="41">
    <source>
    </source>
</evidence>
<evidence type="ECO:0000305" key="42">
    <source>
    </source>
</evidence>
<evidence type="ECO:0000312" key="43">
    <source>
        <dbReference type="HGNC" id="HGNC:869"/>
    </source>
</evidence>
<evidence type="ECO:0007744" key="44">
    <source>
        <dbReference type="PDB" id="5T7L"/>
    </source>
</evidence>
<evidence type="ECO:0007744" key="45">
    <source>
    </source>
</evidence>
<evidence type="ECO:0007744" key="46">
    <source>
    </source>
</evidence>
<evidence type="ECO:0007744" key="47">
    <source>
    </source>
</evidence>
<evidence type="ECO:0007829" key="48">
    <source>
        <dbReference type="PDB" id="1AW0"/>
    </source>
</evidence>
<evidence type="ECO:0007829" key="49">
    <source>
        <dbReference type="PDB" id="1KVI"/>
    </source>
</evidence>
<evidence type="ECO:0007829" key="50">
    <source>
        <dbReference type="PDB" id="1Q8L"/>
    </source>
</evidence>
<evidence type="ECO:0007829" key="51">
    <source>
        <dbReference type="PDB" id="1S6O"/>
    </source>
</evidence>
<evidence type="ECO:0007829" key="52">
    <source>
        <dbReference type="PDB" id="1S6U"/>
    </source>
</evidence>
<evidence type="ECO:0007829" key="53">
    <source>
        <dbReference type="PDB" id="1Y3J"/>
    </source>
</evidence>
<evidence type="ECO:0007829" key="54">
    <source>
        <dbReference type="PDB" id="1YJR"/>
    </source>
</evidence>
<evidence type="ECO:0007829" key="55">
    <source>
        <dbReference type="PDB" id="2G9O"/>
    </source>
</evidence>
<evidence type="ECO:0007829" key="56">
    <source>
        <dbReference type="PDB" id="2GA7"/>
    </source>
</evidence>
<evidence type="ECO:0007829" key="57">
    <source>
        <dbReference type="PDB" id="2KIJ"/>
    </source>
</evidence>
<evidence type="ECO:0007829" key="58">
    <source>
        <dbReference type="PDB" id="2KMV"/>
    </source>
</evidence>
<evidence type="ECO:0007829" key="59">
    <source>
        <dbReference type="PDB" id="2KMX"/>
    </source>
</evidence>
<evidence type="ECO:0007829" key="60">
    <source>
        <dbReference type="PDB" id="3CJK"/>
    </source>
</evidence>
<evidence type="ECO:0007829" key="61">
    <source>
        <dbReference type="PDB" id="7LU8"/>
    </source>
</evidence>
<proteinExistence type="evidence at protein level"/>
<accession>Q04656</accession>
<accession>B1AT72</accession>
<accession>O00227</accession>
<accession>O00745</accession>
<accession>Q9BYY8</accession>
<dbReference type="EC" id="7.2.2.8" evidence="9 42"/>
<dbReference type="EMBL" id="L06133">
    <property type="protein sequence ID" value="AAA35580.1"/>
    <property type="molecule type" value="mRNA"/>
</dbReference>
<dbReference type="EMBL" id="X82336">
    <property type="protein sequence ID" value="CAB94714.1"/>
    <property type="molecule type" value="Genomic_DNA"/>
</dbReference>
<dbReference type="EMBL" id="X82337">
    <property type="protein sequence ID" value="CAB94714.1"/>
    <property type="status" value="JOINED"/>
    <property type="molecule type" value="Genomic_DNA"/>
</dbReference>
<dbReference type="EMBL" id="X82338">
    <property type="protein sequence ID" value="CAB94714.1"/>
    <property type="status" value="JOINED"/>
    <property type="molecule type" value="Genomic_DNA"/>
</dbReference>
<dbReference type="EMBL" id="X82339">
    <property type="protein sequence ID" value="CAB94714.1"/>
    <property type="status" value="JOINED"/>
    <property type="molecule type" value="Genomic_DNA"/>
</dbReference>
<dbReference type="EMBL" id="X82340">
    <property type="protein sequence ID" value="CAB94714.1"/>
    <property type="status" value="JOINED"/>
    <property type="molecule type" value="Genomic_DNA"/>
</dbReference>
<dbReference type="EMBL" id="X82341">
    <property type="protein sequence ID" value="CAB94714.1"/>
    <property type="status" value="JOINED"/>
    <property type="molecule type" value="Genomic_DNA"/>
</dbReference>
<dbReference type="EMBL" id="X82342">
    <property type="protein sequence ID" value="CAB94714.1"/>
    <property type="status" value="JOINED"/>
    <property type="molecule type" value="Genomic_DNA"/>
</dbReference>
<dbReference type="EMBL" id="X82343">
    <property type="protein sequence ID" value="CAB94714.1"/>
    <property type="status" value="JOINED"/>
    <property type="molecule type" value="Genomic_DNA"/>
</dbReference>
<dbReference type="EMBL" id="X82344">
    <property type="protein sequence ID" value="CAB94714.1"/>
    <property type="status" value="JOINED"/>
    <property type="molecule type" value="Genomic_DNA"/>
</dbReference>
<dbReference type="EMBL" id="X82345">
    <property type="protein sequence ID" value="CAB94714.1"/>
    <property type="status" value="JOINED"/>
    <property type="molecule type" value="Genomic_DNA"/>
</dbReference>
<dbReference type="EMBL" id="X82346">
    <property type="protein sequence ID" value="CAB94714.1"/>
    <property type="status" value="JOINED"/>
    <property type="molecule type" value="Genomic_DNA"/>
</dbReference>
<dbReference type="EMBL" id="X82347">
    <property type="protein sequence ID" value="CAB94714.1"/>
    <property type="status" value="JOINED"/>
    <property type="molecule type" value="Genomic_DNA"/>
</dbReference>
<dbReference type="EMBL" id="X82348">
    <property type="protein sequence ID" value="CAB94714.1"/>
    <property type="status" value="JOINED"/>
    <property type="molecule type" value="Genomic_DNA"/>
</dbReference>
<dbReference type="EMBL" id="X82349">
    <property type="protein sequence ID" value="CAB94714.1"/>
    <property type="status" value="JOINED"/>
    <property type="molecule type" value="Genomic_DNA"/>
</dbReference>
<dbReference type="EMBL" id="X82350">
    <property type="protein sequence ID" value="CAB94714.1"/>
    <property type="status" value="JOINED"/>
    <property type="molecule type" value="Genomic_DNA"/>
</dbReference>
<dbReference type="EMBL" id="X82351">
    <property type="protein sequence ID" value="CAB94714.1"/>
    <property type="status" value="JOINED"/>
    <property type="molecule type" value="Genomic_DNA"/>
</dbReference>
<dbReference type="EMBL" id="X82352">
    <property type="protein sequence ID" value="CAB94714.1"/>
    <property type="status" value="JOINED"/>
    <property type="molecule type" value="Genomic_DNA"/>
</dbReference>
<dbReference type="EMBL" id="X82353">
    <property type="protein sequence ID" value="CAB94714.1"/>
    <property type="status" value="JOINED"/>
    <property type="molecule type" value="Genomic_DNA"/>
</dbReference>
<dbReference type="EMBL" id="X82354">
    <property type="protein sequence ID" value="CAB94714.1"/>
    <property type="status" value="JOINED"/>
    <property type="molecule type" value="Genomic_DNA"/>
</dbReference>
<dbReference type="EMBL" id="X82355">
    <property type="protein sequence ID" value="CAB94714.1"/>
    <property type="status" value="JOINED"/>
    <property type="molecule type" value="Genomic_DNA"/>
</dbReference>
<dbReference type="EMBL" id="X82356">
    <property type="protein sequence ID" value="CAB94714.1"/>
    <property type="status" value="JOINED"/>
    <property type="molecule type" value="Genomic_DNA"/>
</dbReference>
<dbReference type="EMBL" id="AL645821">
    <property type="status" value="NOT_ANNOTATED_CDS"/>
    <property type="molecule type" value="Genomic_DNA"/>
</dbReference>
<dbReference type="EMBL" id="Z94753">
    <property type="protein sequence ID" value="CAB08160.1"/>
    <property type="molecule type" value="Genomic_DNA"/>
</dbReference>
<dbReference type="EMBL" id="Z94801">
    <property type="protein sequence ID" value="CAB08162.2"/>
    <property type="molecule type" value="Genomic_DNA"/>
</dbReference>
<dbReference type="EMBL" id="CH471104">
    <property type="protein sequence ID" value="EAW98605.1"/>
    <property type="molecule type" value="Genomic_DNA"/>
</dbReference>
<dbReference type="EMBL" id="U27381">
    <property type="protein sequence ID" value="AAA96010.1"/>
    <property type="molecule type" value="Genomic_DNA"/>
</dbReference>
<dbReference type="EMBL" id="U27361">
    <property type="protein sequence ID" value="AAA96010.1"/>
    <property type="status" value="JOINED"/>
    <property type="molecule type" value="Genomic_DNA"/>
</dbReference>
<dbReference type="EMBL" id="U27362">
    <property type="protein sequence ID" value="AAA96010.1"/>
    <property type="status" value="JOINED"/>
    <property type="molecule type" value="Genomic_DNA"/>
</dbReference>
<dbReference type="EMBL" id="U27363">
    <property type="protein sequence ID" value="AAA96010.1"/>
    <property type="status" value="JOINED"/>
    <property type="molecule type" value="Genomic_DNA"/>
</dbReference>
<dbReference type="EMBL" id="U27365">
    <property type="protein sequence ID" value="AAA96010.1"/>
    <property type="status" value="JOINED"/>
    <property type="molecule type" value="Genomic_DNA"/>
</dbReference>
<dbReference type="EMBL" id="U27366">
    <property type="protein sequence ID" value="AAA96010.1"/>
    <property type="status" value="JOINED"/>
    <property type="molecule type" value="Genomic_DNA"/>
</dbReference>
<dbReference type="EMBL" id="U27367">
    <property type="protein sequence ID" value="AAA96010.1"/>
    <property type="status" value="JOINED"/>
    <property type="molecule type" value="Genomic_DNA"/>
</dbReference>
<dbReference type="EMBL" id="U27368">
    <property type="protein sequence ID" value="AAA96010.1"/>
    <property type="status" value="JOINED"/>
    <property type="molecule type" value="Genomic_DNA"/>
</dbReference>
<dbReference type="EMBL" id="U27369">
    <property type="protein sequence ID" value="AAA96010.1"/>
    <property type="status" value="JOINED"/>
    <property type="molecule type" value="Genomic_DNA"/>
</dbReference>
<dbReference type="EMBL" id="U27370">
    <property type="protein sequence ID" value="AAA96010.1"/>
    <property type="status" value="JOINED"/>
    <property type="molecule type" value="Genomic_DNA"/>
</dbReference>
<dbReference type="EMBL" id="U27371">
    <property type="protein sequence ID" value="AAA96010.1"/>
    <property type="status" value="JOINED"/>
    <property type="molecule type" value="Genomic_DNA"/>
</dbReference>
<dbReference type="EMBL" id="U27372">
    <property type="protein sequence ID" value="AAA96010.1"/>
    <property type="status" value="JOINED"/>
    <property type="molecule type" value="Genomic_DNA"/>
</dbReference>
<dbReference type="EMBL" id="U27373">
    <property type="protein sequence ID" value="AAA96010.1"/>
    <property type="status" value="JOINED"/>
    <property type="molecule type" value="Genomic_DNA"/>
</dbReference>
<dbReference type="EMBL" id="U27374">
    <property type="protein sequence ID" value="AAA96010.1"/>
    <property type="status" value="JOINED"/>
    <property type="molecule type" value="Genomic_DNA"/>
</dbReference>
<dbReference type="EMBL" id="U27375">
    <property type="protein sequence ID" value="AAA96010.1"/>
    <property type="status" value="JOINED"/>
    <property type="molecule type" value="Genomic_DNA"/>
</dbReference>
<dbReference type="EMBL" id="U27376">
    <property type="protein sequence ID" value="AAA96010.1"/>
    <property type="status" value="JOINED"/>
    <property type="molecule type" value="Genomic_DNA"/>
</dbReference>
<dbReference type="EMBL" id="U27377">
    <property type="protein sequence ID" value="AAA96010.1"/>
    <property type="status" value="JOINED"/>
    <property type="molecule type" value="Genomic_DNA"/>
</dbReference>
<dbReference type="EMBL" id="U27378">
    <property type="protein sequence ID" value="AAA96010.1"/>
    <property type="status" value="JOINED"/>
    <property type="molecule type" value="Genomic_DNA"/>
</dbReference>
<dbReference type="EMBL" id="U27379">
    <property type="protein sequence ID" value="AAA96010.1"/>
    <property type="status" value="JOINED"/>
    <property type="molecule type" value="Genomic_DNA"/>
</dbReference>
<dbReference type="EMBL" id="U27380">
    <property type="protein sequence ID" value="AAA96010.1"/>
    <property type="status" value="JOINED"/>
    <property type="molecule type" value="Genomic_DNA"/>
</dbReference>
<dbReference type="EMBL" id="X69208">
    <property type="protein sequence ID" value="CAA49145.1"/>
    <property type="molecule type" value="mRNA"/>
</dbReference>
<dbReference type="EMBL" id="L06476">
    <property type="protein sequence ID" value="AAA16974.1"/>
    <property type="molecule type" value="mRNA"/>
</dbReference>
<dbReference type="EMBL" id="AY011418">
    <property type="protein sequence ID" value="AAG47452.1"/>
    <property type="molecule type" value="Genomic_DNA"/>
</dbReference>
<dbReference type="CCDS" id="CCDS35339.1">
    <molecule id="Q04656-1"/>
</dbReference>
<dbReference type="CCDS" id="CCDS75997.1">
    <molecule id="Q04656-5"/>
</dbReference>
<dbReference type="PIR" id="S36149">
    <property type="entry name" value="S36149"/>
</dbReference>
<dbReference type="RefSeq" id="NP_000043.4">
    <molecule id="Q04656-1"/>
    <property type="nucleotide sequence ID" value="NM_000052.7"/>
</dbReference>
<dbReference type="RefSeq" id="NP_001269153.1">
    <molecule id="Q04656-5"/>
    <property type="nucleotide sequence ID" value="NM_001282224.2"/>
</dbReference>
<dbReference type="PDB" id="1AW0">
    <property type="method" value="NMR"/>
    <property type="chains" value="A=375-446"/>
</dbReference>
<dbReference type="PDB" id="1KVI">
    <property type="method" value="NMR"/>
    <property type="chains" value="A=1-79"/>
</dbReference>
<dbReference type="PDB" id="1KVJ">
    <property type="method" value="NMR"/>
    <property type="chains" value="A=1-79"/>
</dbReference>
<dbReference type="PDB" id="1Q8L">
    <property type="method" value="NMR"/>
    <property type="chains" value="A=164-246"/>
</dbReference>
<dbReference type="PDB" id="1S6O">
    <property type="method" value="NMR"/>
    <property type="chains" value="A=169-240"/>
</dbReference>
<dbReference type="PDB" id="1S6U">
    <property type="method" value="NMR"/>
    <property type="chains" value="A=169-240"/>
</dbReference>
<dbReference type="PDB" id="1Y3J">
    <property type="method" value="NMR"/>
    <property type="chains" value="A=486-558"/>
</dbReference>
<dbReference type="PDB" id="1Y3K">
    <property type="method" value="NMR"/>
    <property type="chains" value="A=486-558"/>
</dbReference>
<dbReference type="PDB" id="1YJR">
    <property type="method" value="NMR"/>
    <property type="chains" value="A=562-633"/>
</dbReference>
<dbReference type="PDB" id="1YJT">
    <property type="method" value="NMR"/>
    <property type="chains" value="A=562-633"/>
</dbReference>
<dbReference type="PDB" id="1YJU">
    <property type="method" value="NMR"/>
    <property type="chains" value="A=562-633"/>
</dbReference>
<dbReference type="PDB" id="1YJV">
    <property type="method" value="NMR"/>
    <property type="chains" value="A=562-633"/>
</dbReference>
<dbReference type="PDB" id="2AW0">
    <property type="method" value="NMR"/>
    <property type="chains" value="A=375-446"/>
</dbReference>
<dbReference type="PDB" id="2G9O">
    <property type="method" value="NMR"/>
    <property type="chains" value="A=275-352"/>
</dbReference>
<dbReference type="PDB" id="2GA7">
    <property type="method" value="NMR"/>
    <property type="chains" value="A=275-352"/>
</dbReference>
<dbReference type="PDB" id="2K1R">
    <property type="method" value="NMR"/>
    <property type="chains" value="A=5-77"/>
</dbReference>
<dbReference type="PDB" id="2KIJ">
    <property type="method" value="NMR"/>
    <property type="chains" value="A=806-924"/>
</dbReference>
<dbReference type="PDB" id="2KMV">
    <property type="method" value="NMR"/>
    <property type="chains" value="A=1051-1231"/>
</dbReference>
<dbReference type="PDB" id="2KMX">
    <property type="method" value="NMR"/>
    <property type="chains" value="A=1051-1231"/>
</dbReference>
<dbReference type="PDB" id="3CJK">
    <property type="method" value="X-ray"/>
    <property type="resolution" value="1.80 A"/>
    <property type="chains" value="B=7-77"/>
</dbReference>
<dbReference type="PDB" id="5T7L">
    <property type="method" value="X-ray"/>
    <property type="resolution" value="2.83 A"/>
    <property type="chains" value="B=7-77"/>
</dbReference>
<dbReference type="PDB" id="7LU8">
    <property type="method" value="NMR"/>
    <property type="chains" value="A=84-156"/>
</dbReference>
<dbReference type="PDBsum" id="1AW0"/>
<dbReference type="PDBsum" id="1KVI"/>
<dbReference type="PDBsum" id="1KVJ"/>
<dbReference type="PDBsum" id="1Q8L"/>
<dbReference type="PDBsum" id="1S6O"/>
<dbReference type="PDBsum" id="1S6U"/>
<dbReference type="PDBsum" id="1Y3J"/>
<dbReference type="PDBsum" id="1Y3K"/>
<dbReference type="PDBsum" id="1YJR"/>
<dbReference type="PDBsum" id="1YJT"/>
<dbReference type="PDBsum" id="1YJU"/>
<dbReference type="PDBsum" id="1YJV"/>
<dbReference type="PDBsum" id="2AW0"/>
<dbReference type="PDBsum" id="2G9O"/>
<dbReference type="PDBsum" id="2GA7"/>
<dbReference type="PDBsum" id="2K1R"/>
<dbReference type="PDBsum" id="2KIJ"/>
<dbReference type="PDBsum" id="2KMV"/>
<dbReference type="PDBsum" id="2KMX"/>
<dbReference type="PDBsum" id="3CJK"/>
<dbReference type="PDBsum" id="5T7L"/>
<dbReference type="PDBsum" id="7LU8"/>
<dbReference type="BMRB" id="Q04656"/>
<dbReference type="SMR" id="Q04656"/>
<dbReference type="BioGRID" id="107020">
    <property type="interactions" value="102"/>
</dbReference>
<dbReference type="ELM" id="Q04656"/>
<dbReference type="FunCoup" id="Q04656">
    <property type="interactions" value="1783"/>
</dbReference>
<dbReference type="IntAct" id="Q04656">
    <property type="interactions" value="55"/>
</dbReference>
<dbReference type="MINT" id="Q04656"/>
<dbReference type="STRING" id="9606.ENSP00000345728"/>
<dbReference type="ChEMBL" id="CHEMBL5291564"/>
<dbReference type="DrugBank" id="DB00958">
    <property type="generic name" value="Carboplatin"/>
</dbReference>
<dbReference type="DrugBank" id="DB00515">
    <property type="generic name" value="Cisplatin"/>
</dbReference>
<dbReference type="DrugBank" id="DB09130">
    <property type="generic name" value="Copper"/>
</dbReference>
<dbReference type="DrugBank" id="DB00526">
    <property type="generic name" value="Oxaliplatin"/>
</dbReference>
<dbReference type="TCDB" id="3.A.3.5.6">
    <property type="family name" value="the p-type atpase (p-atpase) superfamily"/>
</dbReference>
<dbReference type="GlyCosmos" id="Q04656">
    <property type="glycosylation" value="2 sites, No reported glycans"/>
</dbReference>
<dbReference type="GlyGen" id="Q04656">
    <property type="glycosylation" value="4 sites, 1 N-linked glycan (1 site), 1 O-linked glycan (1 site)"/>
</dbReference>
<dbReference type="iPTMnet" id="Q04656"/>
<dbReference type="PhosphoSitePlus" id="Q04656"/>
<dbReference type="SwissPalm" id="Q04656"/>
<dbReference type="BioMuta" id="ATP7A"/>
<dbReference type="DMDM" id="223590241"/>
<dbReference type="jPOST" id="Q04656"/>
<dbReference type="MassIVE" id="Q04656"/>
<dbReference type="PaxDb" id="9606-ENSP00000345728"/>
<dbReference type="PeptideAtlas" id="Q04656"/>
<dbReference type="ProteomicsDB" id="58255">
    <molecule id="Q04656-1"/>
</dbReference>
<dbReference type="ProteomicsDB" id="58256">
    <molecule id="Q04656-2"/>
</dbReference>
<dbReference type="ProteomicsDB" id="58257">
    <molecule id="Q04656-3"/>
</dbReference>
<dbReference type="ProteomicsDB" id="58258">
    <molecule id="Q04656-4"/>
</dbReference>
<dbReference type="ProteomicsDB" id="58259">
    <molecule id="Q04656-5"/>
</dbReference>
<dbReference type="Pumba" id="Q04656"/>
<dbReference type="ABCD" id="Q04656">
    <property type="antibodies" value="1 sequenced antibody"/>
</dbReference>
<dbReference type="Antibodypedia" id="536">
    <property type="antibodies" value="405 antibodies from 36 providers"/>
</dbReference>
<dbReference type="DNASU" id="538"/>
<dbReference type="Ensembl" id="ENST00000341514.11">
    <molecule id="Q04656-1"/>
    <property type="protein sequence ID" value="ENSP00000345728.6"/>
    <property type="gene ID" value="ENSG00000165240.22"/>
</dbReference>
<dbReference type="Ensembl" id="ENST00000685264.1">
    <molecule id="Q04656-1"/>
    <property type="protein sequence ID" value="ENSP00000510136.1"/>
    <property type="gene ID" value="ENSG00000165240.22"/>
</dbReference>
<dbReference type="Ensembl" id="ENST00000686133.1">
    <molecule id="Q04656-1"/>
    <property type="protein sequence ID" value="ENSP00000509233.1"/>
    <property type="gene ID" value="ENSG00000165240.22"/>
</dbReference>
<dbReference type="Ensembl" id="ENST00000686543.1">
    <molecule id="Q04656-5"/>
    <property type="protein sequence ID" value="ENSP00000509477.1"/>
    <property type="gene ID" value="ENSG00000165240.22"/>
</dbReference>
<dbReference type="Ensembl" id="ENST00000687086.1">
    <molecule id="Q04656-1"/>
    <property type="protein sequence ID" value="ENSP00000509566.1"/>
    <property type="gene ID" value="ENSG00000165240.22"/>
</dbReference>
<dbReference type="Ensembl" id="ENST00000692908.1">
    <molecule id="Q04656-5"/>
    <property type="protein sequence ID" value="ENSP00000508627.1"/>
    <property type="gene ID" value="ENSG00000165240.22"/>
</dbReference>
<dbReference type="GeneID" id="538"/>
<dbReference type="KEGG" id="hsa:538"/>
<dbReference type="MANE-Select" id="ENST00000341514.11">
    <property type="protein sequence ID" value="ENSP00000345728.6"/>
    <property type="RefSeq nucleotide sequence ID" value="NM_000052.7"/>
    <property type="RefSeq protein sequence ID" value="NP_000043.4"/>
</dbReference>
<dbReference type="UCSC" id="uc004ecx.6">
    <molecule id="Q04656-1"/>
    <property type="organism name" value="human"/>
</dbReference>
<dbReference type="AGR" id="HGNC:869"/>
<dbReference type="CTD" id="538"/>
<dbReference type="DisGeNET" id="538"/>
<dbReference type="GeneCards" id="ATP7A"/>
<dbReference type="GeneReviews" id="ATP7A"/>
<dbReference type="HGNC" id="HGNC:869">
    <property type="gene designation" value="ATP7A"/>
</dbReference>
<dbReference type="HPA" id="ENSG00000165240">
    <property type="expression patterns" value="Low tissue specificity"/>
</dbReference>
<dbReference type="MalaCards" id="ATP7A"/>
<dbReference type="MIM" id="300011">
    <property type="type" value="gene"/>
</dbReference>
<dbReference type="MIM" id="300489">
    <property type="type" value="phenotype"/>
</dbReference>
<dbReference type="MIM" id="304150">
    <property type="type" value="phenotype"/>
</dbReference>
<dbReference type="MIM" id="309400">
    <property type="type" value="phenotype"/>
</dbReference>
<dbReference type="neXtProt" id="NX_Q04656"/>
<dbReference type="OpenTargets" id="ENSG00000165240"/>
<dbReference type="Orphanet" id="388">
    <property type="disease" value="Hirschsprung disease"/>
</dbReference>
<dbReference type="Orphanet" id="565">
    <property type="disease" value="Menkes disease"/>
</dbReference>
<dbReference type="Orphanet" id="198">
    <property type="disease" value="Occipital horn syndrome"/>
</dbReference>
<dbReference type="Orphanet" id="139557">
    <property type="disease" value="X-linked distal spinal muscular atrophy type 3"/>
</dbReference>
<dbReference type="PharmGKB" id="PA72"/>
<dbReference type="VEuPathDB" id="HostDB:ENSG00000165240"/>
<dbReference type="eggNOG" id="KOG0207">
    <property type="taxonomic scope" value="Eukaryota"/>
</dbReference>
<dbReference type="GeneTree" id="ENSGT00940000159568"/>
<dbReference type="HOGENOM" id="CLU_001771_0_1_1"/>
<dbReference type="InParanoid" id="Q04656"/>
<dbReference type="OMA" id="DHMMESK"/>
<dbReference type="OrthoDB" id="432719at2759"/>
<dbReference type="PAN-GO" id="Q04656">
    <property type="GO annotations" value="8 GO annotations based on evolutionary models"/>
</dbReference>
<dbReference type="PhylomeDB" id="Q04656"/>
<dbReference type="TreeFam" id="TF300460"/>
<dbReference type="BRENDA" id="7.2.2.8">
    <property type="organism ID" value="2681"/>
</dbReference>
<dbReference type="BRENDA" id="7.2.2.9">
    <property type="organism ID" value="2681"/>
</dbReference>
<dbReference type="PathwayCommons" id="Q04656"/>
<dbReference type="Reactome" id="R-HSA-3299685">
    <property type="pathway name" value="Detoxification of Reactive Oxygen Species"/>
</dbReference>
<dbReference type="Reactome" id="R-HSA-6803544">
    <property type="pathway name" value="Ion influx/efflux at host-pathogen interface"/>
</dbReference>
<dbReference type="Reactome" id="R-HSA-936837">
    <property type="pathway name" value="Ion transport by P-type ATPases"/>
</dbReference>
<dbReference type="SABIO-RK" id="Q04656"/>
<dbReference type="SignaLink" id="Q04656"/>
<dbReference type="SIGNOR" id="Q04656"/>
<dbReference type="BioGRID-ORCS" id="538">
    <property type="hits" value="16 hits in 777 CRISPR screens"/>
</dbReference>
<dbReference type="ChiTaRS" id="ATP7A">
    <property type="organism name" value="human"/>
</dbReference>
<dbReference type="EvolutionaryTrace" id="Q04656"/>
<dbReference type="GeneWiki" id="ATP7A"/>
<dbReference type="GenomeRNAi" id="538"/>
<dbReference type="Pharos" id="Q04656">
    <property type="development level" value="Tbio"/>
</dbReference>
<dbReference type="PRO" id="PR:Q04656"/>
<dbReference type="Proteomes" id="UP000005640">
    <property type="component" value="Chromosome X"/>
</dbReference>
<dbReference type="RNAct" id="Q04656">
    <property type="molecule type" value="protein"/>
</dbReference>
<dbReference type="Bgee" id="ENSG00000165240">
    <property type="expression patterns" value="Expressed in buccal mucosa cell and 201 other cell types or tissues"/>
</dbReference>
<dbReference type="ExpressionAtlas" id="Q04656">
    <property type="expression patterns" value="baseline and differential"/>
</dbReference>
<dbReference type="GO" id="GO:0030424">
    <property type="term" value="C:axon"/>
    <property type="evidence" value="ECO:0000250"/>
    <property type="project" value="UniProtKB"/>
</dbReference>
<dbReference type="GO" id="GO:0016323">
    <property type="term" value="C:basolateral plasma membrane"/>
    <property type="evidence" value="ECO:0000314"/>
    <property type="project" value="UniProtKB"/>
</dbReference>
<dbReference type="GO" id="GO:0005829">
    <property type="term" value="C:cytosol"/>
    <property type="evidence" value="ECO:0007669"/>
    <property type="project" value="UniProtKB-SubCell"/>
</dbReference>
<dbReference type="GO" id="GO:0030425">
    <property type="term" value="C:dendrite"/>
    <property type="evidence" value="ECO:0000250"/>
    <property type="project" value="UniProtKB"/>
</dbReference>
<dbReference type="GO" id="GO:0031901">
    <property type="term" value="C:early endosome membrane"/>
    <property type="evidence" value="ECO:0000250"/>
    <property type="project" value="UniProtKB"/>
</dbReference>
<dbReference type="GO" id="GO:0005783">
    <property type="term" value="C:endoplasmic reticulum"/>
    <property type="evidence" value="ECO:0000314"/>
    <property type="project" value="UniProtKB"/>
</dbReference>
<dbReference type="GO" id="GO:0005794">
    <property type="term" value="C:Golgi apparatus"/>
    <property type="evidence" value="ECO:0000314"/>
    <property type="project" value="HPA"/>
</dbReference>
<dbReference type="GO" id="GO:0005770">
    <property type="term" value="C:late endosome"/>
    <property type="evidence" value="ECO:0000314"/>
    <property type="project" value="UniProtKB"/>
</dbReference>
<dbReference type="GO" id="GO:0033162">
    <property type="term" value="C:melanosome membrane"/>
    <property type="evidence" value="ECO:0000250"/>
    <property type="project" value="UniProtKB"/>
</dbReference>
<dbReference type="GO" id="GO:0016020">
    <property type="term" value="C:membrane"/>
    <property type="evidence" value="ECO:0007005"/>
    <property type="project" value="UniProtKB"/>
</dbReference>
<dbReference type="GO" id="GO:0043005">
    <property type="term" value="C:neuron projection"/>
    <property type="evidence" value="ECO:0000250"/>
    <property type="project" value="UniProtKB"/>
</dbReference>
<dbReference type="GO" id="GO:0043025">
    <property type="term" value="C:neuronal cell body"/>
    <property type="evidence" value="ECO:0000250"/>
    <property type="project" value="UniProtKB"/>
</dbReference>
<dbReference type="GO" id="GO:0048471">
    <property type="term" value="C:perinuclear region of cytoplasm"/>
    <property type="evidence" value="ECO:0000314"/>
    <property type="project" value="UniProtKB"/>
</dbReference>
<dbReference type="GO" id="GO:0030670">
    <property type="term" value="C:phagocytic vesicle membrane"/>
    <property type="evidence" value="ECO:0000304"/>
    <property type="project" value="Reactome"/>
</dbReference>
<dbReference type="GO" id="GO:0005886">
    <property type="term" value="C:plasma membrane"/>
    <property type="evidence" value="ECO:0000314"/>
    <property type="project" value="UniProtKB"/>
</dbReference>
<dbReference type="GO" id="GO:0014069">
    <property type="term" value="C:postsynaptic density"/>
    <property type="evidence" value="ECO:0007669"/>
    <property type="project" value="UniProtKB-SubCell"/>
</dbReference>
<dbReference type="GO" id="GO:0005802">
    <property type="term" value="C:trans-Golgi network"/>
    <property type="evidence" value="ECO:0000314"/>
    <property type="project" value="UniProtKB"/>
</dbReference>
<dbReference type="GO" id="GO:0032588">
    <property type="term" value="C:trans-Golgi network membrane"/>
    <property type="evidence" value="ECO:0000250"/>
    <property type="project" value="UniProtKB"/>
</dbReference>
<dbReference type="GO" id="GO:0030140">
    <property type="term" value="C:trans-Golgi network transport vesicle"/>
    <property type="evidence" value="ECO:0000315"/>
    <property type="project" value="HGNC-UCL"/>
</dbReference>
<dbReference type="GO" id="GO:0005524">
    <property type="term" value="F:ATP binding"/>
    <property type="evidence" value="ECO:0000314"/>
    <property type="project" value="UniProtKB"/>
</dbReference>
<dbReference type="GO" id="GO:0016887">
    <property type="term" value="F:ATP hydrolysis activity"/>
    <property type="evidence" value="ECO:0007669"/>
    <property type="project" value="InterPro"/>
</dbReference>
<dbReference type="GO" id="GO:0005507">
    <property type="term" value="F:copper ion binding"/>
    <property type="evidence" value="ECO:0000314"/>
    <property type="project" value="UniProtKB"/>
</dbReference>
<dbReference type="GO" id="GO:0005375">
    <property type="term" value="F:copper ion transmembrane transporter activity"/>
    <property type="evidence" value="ECO:0000250"/>
    <property type="project" value="UniProtKB"/>
</dbReference>
<dbReference type="GO" id="GO:0032767">
    <property type="term" value="F:copper-dependent protein binding"/>
    <property type="evidence" value="ECO:0000314"/>
    <property type="project" value="UniProtKB"/>
</dbReference>
<dbReference type="GO" id="GO:1903136">
    <property type="term" value="F:cuprous ion binding"/>
    <property type="evidence" value="ECO:0000314"/>
    <property type="project" value="UniProtKB"/>
</dbReference>
<dbReference type="GO" id="GO:0043682">
    <property type="term" value="F:P-type divalent copper transporter activity"/>
    <property type="evidence" value="ECO:0000250"/>
    <property type="project" value="UniProtKB"/>
</dbReference>
<dbReference type="GO" id="GO:0140581">
    <property type="term" value="F:P-type monovalent copper transporter activity"/>
    <property type="evidence" value="ECO:0000314"/>
    <property type="project" value="UniProtKB"/>
</dbReference>
<dbReference type="GO" id="GO:0016532">
    <property type="term" value="F:superoxide dismutase copper chaperone activity"/>
    <property type="evidence" value="ECO:0000250"/>
    <property type="project" value="UniProtKB"/>
</dbReference>
<dbReference type="GO" id="GO:0046034">
    <property type="term" value="P:ATP metabolic process"/>
    <property type="evidence" value="ECO:0007669"/>
    <property type="project" value="Ensembl"/>
</dbReference>
<dbReference type="GO" id="GO:0001568">
    <property type="term" value="P:blood vessel development"/>
    <property type="evidence" value="ECO:0000250"/>
    <property type="project" value="UniProtKB"/>
</dbReference>
<dbReference type="GO" id="GO:0001974">
    <property type="term" value="P:blood vessel remodeling"/>
    <property type="evidence" value="ECO:0000250"/>
    <property type="project" value="UniProtKB"/>
</dbReference>
<dbReference type="GO" id="GO:0051216">
    <property type="term" value="P:cartilage development"/>
    <property type="evidence" value="ECO:0000250"/>
    <property type="project" value="UniProtKB"/>
</dbReference>
<dbReference type="GO" id="GO:0006584">
    <property type="term" value="P:catecholamine metabolic process"/>
    <property type="evidence" value="ECO:0000250"/>
    <property type="project" value="UniProtKB"/>
</dbReference>
<dbReference type="GO" id="GO:0021954">
    <property type="term" value="P:central nervous system neuron development"/>
    <property type="evidence" value="ECO:0000250"/>
    <property type="project" value="UniProtKB"/>
</dbReference>
<dbReference type="GO" id="GO:0021702">
    <property type="term" value="P:cerebellar Purkinje cell differentiation"/>
    <property type="evidence" value="ECO:0000250"/>
    <property type="project" value="UniProtKB"/>
</dbReference>
<dbReference type="GO" id="GO:0030199">
    <property type="term" value="P:collagen fibril organization"/>
    <property type="evidence" value="ECO:0000250"/>
    <property type="project" value="UniProtKB"/>
</dbReference>
<dbReference type="GO" id="GO:0060003">
    <property type="term" value="P:copper ion export"/>
    <property type="evidence" value="ECO:0000314"/>
    <property type="project" value="UniProtKB"/>
</dbReference>
<dbReference type="GO" id="GO:0015677">
    <property type="term" value="P:copper ion import"/>
    <property type="evidence" value="ECO:0000250"/>
    <property type="project" value="UniProtKB"/>
</dbReference>
<dbReference type="GO" id="GO:0006825">
    <property type="term" value="P:copper ion transport"/>
    <property type="evidence" value="ECO:0000315"/>
    <property type="project" value="UniProtKB"/>
</dbReference>
<dbReference type="GO" id="GO:0048813">
    <property type="term" value="P:dendrite morphogenesis"/>
    <property type="evidence" value="ECO:0007669"/>
    <property type="project" value="Ensembl"/>
</dbReference>
<dbReference type="GO" id="GO:0010273">
    <property type="term" value="P:detoxification of copper ion"/>
    <property type="evidence" value="ECO:0000250"/>
    <property type="project" value="UniProtKB"/>
</dbReference>
<dbReference type="GO" id="GO:0042417">
    <property type="term" value="P:dopamine metabolic process"/>
    <property type="evidence" value="ECO:0000250"/>
    <property type="project" value="UniProtKB"/>
</dbReference>
<dbReference type="GO" id="GO:0048251">
    <property type="term" value="P:elastic fiber assembly"/>
    <property type="evidence" value="ECO:0000250"/>
    <property type="project" value="UniProtKB"/>
</dbReference>
<dbReference type="GO" id="GO:0042414">
    <property type="term" value="P:epinephrine metabolic process"/>
    <property type="evidence" value="ECO:0000250"/>
    <property type="project" value="UniProtKB"/>
</dbReference>
<dbReference type="GO" id="GO:0051649">
    <property type="term" value="P:establishment of localization in cell"/>
    <property type="evidence" value="ECO:0007669"/>
    <property type="project" value="Ensembl"/>
</dbReference>
<dbReference type="GO" id="GO:0030198">
    <property type="term" value="P:extracellular matrix organization"/>
    <property type="evidence" value="ECO:0000250"/>
    <property type="project" value="UniProtKB"/>
</dbReference>
<dbReference type="GO" id="GO:0009101">
    <property type="term" value="P:glycoprotein biosynthetic process"/>
    <property type="evidence" value="ECO:0000250"/>
    <property type="project" value="UniProtKB"/>
</dbReference>
<dbReference type="GO" id="GO:0031069">
    <property type="term" value="P:hair follicle morphogenesis"/>
    <property type="evidence" value="ECO:0000250"/>
    <property type="project" value="UniProtKB"/>
</dbReference>
<dbReference type="GO" id="GO:0006878">
    <property type="term" value="P:intracellular copper ion homeostasis"/>
    <property type="evidence" value="ECO:0000315"/>
    <property type="project" value="UniProtKB"/>
</dbReference>
<dbReference type="GO" id="GO:0006568">
    <property type="term" value="P:L-tryptophan metabolic process"/>
    <property type="evidence" value="ECO:0000250"/>
    <property type="project" value="UniProtKB"/>
</dbReference>
<dbReference type="GO" id="GO:0007626">
    <property type="term" value="P:locomotory behavior"/>
    <property type="evidence" value="ECO:0000250"/>
    <property type="project" value="UniProtKB"/>
</dbReference>
<dbReference type="GO" id="GO:0048286">
    <property type="term" value="P:lung alveolus development"/>
    <property type="evidence" value="ECO:0000250"/>
    <property type="project" value="UniProtKB"/>
</dbReference>
<dbReference type="GO" id="GO:0007005">
    <property type="term" value="P:mitochondrion organization"/>
    <property type="evidence" value="ECO:0000250"/>
    <property type="project" value="UniProtKB"/>
</dbReference>
<dbReference type="GO" id="GO:0045914">
    <property type="term" value="P:negative regulation of catecholamine metabolic process"/>
    <property type="evidence" value="ECO:0007669"/>
    <property type="project" value="Ensembl"/>
</dbReference>
<dbReference type="GO" id="GO:0043524">
    <property type="term" value="P:negative regulation of neuron apoptotic process"/>
    <property type="evidence" value="ECO:0007669"/>
    <property type="project" value="Ensembl"/>
</dbReference>
<dbReference type="GO" id="GO:0051402">
    <property type="term" value="P:neuron apoptotic process"/>
    <property type="evidence" value="ECO:0007669"/>
    <property type="project" value="Ensembl"/>
</dbReference>
<dbReference type="GO" id="GO:0070050">
    <property type="term" value="P:neuron cellular homeostasis"/>
    <property type="evidence" value="ECO:0007669"/>
    <property type="project" value="Ensembl"/>
</dbReference>
<dbReference type="GO" id="GO:0048812">
    <property type="term" value="P:neuron projection morphogenesis"/>
    <property type="evidence" value="ECO:0000250"/>
    <property type="project" value="UniProtKB"/>
</dbReference>
<dbReference type="GO" id="GO:0042421">
    <property type="term" value="P:norepinephrine biosynthetic process"/>
    <property type="evidence" value="ECO:0007669"/>
    <property type="project" value="Ensembl"/>
</dbReference>
<dbReference type="GO" id="GO:0042415">
    <property type="term" value="P:norepinephrine metabolic process"/>
    <property type="evidence" value="ECO:0000250"/>
    <property type="project" value="UniProtKB"/>
</dbReference>
<dbReference type="GO" id="GO:0043473">
    <property type="term" value="P:pigmentation"/>
    <property type="evidence" value="ECO:0000250"/>
    <property type="project" value="UniProtKB"/>
</dbReference>
<dbReference type="GO" id="GO:0048023">
    <property type="term" value="P:positive regulation of melanin biosynthetic process"/>
    <property type="evidence" value="ECO:0000315"/>
    <property type="project" value="UniProtKB"/>
</dbReference>
<dbReference type="GO" id="GO:0021860">
    <property type="term" value="P:pyramidal neuron development"/>
    <property type="evidence" value="ECO:0000250"/>
    <property type="project" value="UniProtKB"/>
</dbReference>
<dbReference type="GO" id="GO:0010468">
    <property type="term" value="P:regulation of gene expression"/>
    <property type="evidence" value="ECO:0007669"/>
    <property type="project" value="Ensembl"/>
</dbReference>
<dbReference type="GO" id="GO:0002082">
    <property type="term" value="P:regulation of oxidative phosphorylation"/>
    <property type="evidence" value="ECO:0000250"/>
    <property type="project" value="UniProtKB"/>
</dbReference>
<dbReference type="GO" id="GO:0001836">
    <property type="term" value="P:release of cytochrome c from mitochondria"/>
    <property type="evidence" value="ECO:0007669"/>
    <property type="project" value="Ensembl"/>
</dbReference>
<dbReference type="GO" id="GO:0019430">
    <property type="term" value="P:removal of superoxide radicals"/>
    <property type="evidence" value="ECO:0000250"/>
    <property type="project" value="UniProtKB"/>
</dbReference>
<dbReference type="GO" id="GO:0042428">
    <property type="term" value="P:serotonin metabolic process"/>
    <property type="evidence" value="ECO:0000250"/>
    <property type="project" value="UniProtKB"/>
</dbReference>
<dbReference type="GO" id="GO:0043588">
    <property type="term" value="P:skin development"/>
    <property type="evidence" value="ECO:0000250"/>
    <property type="project" value="UniProtKB"/>
</dbReference>
<dbReference type="GO" id="GO:0042093">
    <property type="term" value="P:T-helper cell differentiation"/>
    <property type="evidence" value="ECO:0000250"/>
    <property type="project" value="UniProtKB"/>
</dbReference>
<dbReference type="GO" id="GO:0006570">
    <property type="term" value="P:tyrosine metabolic process"/>
    <property type="evidence" value="ECO:0007669"/>
    <property type="project" value="Ensembl"/>
</dbReference>
<dbReference type="CDD" id="cd00371">
    <property type="entry name" value="HMA"/>
    <property type="match status" value="6"/>
</dbReference>
<dbReference type="CDD" id="cd02094">
    <property type="entry name" value="P-type_ATPase_Cu-like"/>
    <property type="match status" value="1"/>
</dbReference>
<dbReference type="DisProt" id="DP00282"/>
<dbReference type="FunFam" id="3.30.70.100:FF:000026">
    <property type="entry name" value="ATPase copper transporting alpha"/>
    <property type="match status" value="1"/>
</dbReference>
<dbReference type="FunFam" id="3.30.70.100:FF:000001">
    <property type="entry name" value="ATPase copper transporting beta"/>
    <property type="match status" value="3"/>
</dbReference>
<dbReference type="FunFam" id="3.30.70.100:FF:000009">
    <property type="entry name" value="ATPase copper transporting beta"/>
    <property type="match status" value="1"/>
</dbReference>
<dbReference type="FunFam" id="3.30.70.100:FF:000031">
    <property type="entry name" value="copper-transporting ATPase 1"/>
    <property type="match status" value="1"/>
</dbReference>
<dbReference type="FunFam" id="3.40.50.1000:FF:000230">
    <property type="entry name" value="copper-transporting ATPase 1 isoform X1"/>
    <property type="match status" value="1"/>
</dbReference>
<dbReference type="FunFam" id="1.20.1110.10:FF:000022">
    <property type="entry name" value="copper-transporting ATPase 1 isoform X2"/>
    <property type="match status" value="1"/>
</dbReference>
<dbReference type="FunFam" id="2.70.150.10:FF:000002">
    <property type="entry name" value="Copper-transporting ATPase 1, putative"/>
    <property type="match status" value="1"/>
</dbReference>
<dbReference type="FunFam" id="3.40.1110.10:FF:000023">
    <property type="entry name" value="Copper-transporting ATPase 1, putative"/>
    <property type="match status" value="1"/>
</dbReference>
<dbReference type="Gene3D" id="3.30.70.100">
    <property type="match status" value="6"/>
</dbReference>
<dbReference type="Gene3D" id="3.40.1110.10">
    <property type="entry name" value="Calcium-transporting ATPase, cytoplasmic domain N"/>
    <property type="match status" value="1"/>
</dbReference>
<dbReference type="Gene3D" id="2.70.150.10">
    <property type="entry name" value="Calcium-transporting ATPase, cytoplasmic transduction domain A"/>
    <property type="match status" value="1"/>
</dbReference>
<dbReference type="Gene3D" id="3.40.50.1000">
    <property type="entry name" value="HAD superfamily/HAD-like"/>
    <property type="match status" value="1"/>
</dbReference>
<dbReference type="InterPro" id="IPR023299">
    <property type="entry name" value="ATPase_P-typ_cyto_dom_N"/>
</dbReference>
<dbReference type="InterPro" id="IPR018303">
    <property type="entry name" value="ATPase_P-typ_P_site"/>
</dbReference>
<dbReference type="InterPro" id="IPR023298">
    <property type="entry name" value="ATPase_P-typ_TM_dom_sf"/>
</dbReference>
<dbReference type="InterPro" id="IPR008250">
    <property type="entry name" value="ATPase_P-typ_transduc_dom_A_sf"/>
</dbReference>
<dbReference type="InterPro" id="IPR036412">
    <property type="entry name" value="HAD-like_sf"/>
</dbReference>
<dbReference type="InterPro" id="IPR023214">
    <property type="entry name" value="HAD_sf"/>
</dbReference>
<dbReference type="InterPro" id="IPR017969">
    <property type="entry name" value="Heavy-metal-associated_CS"/>
</dbReference>
<dbReference type="InterPro" id="IPR006122">
    <property type="entry name" value="HMA_Cu_ion-bd"/>
</dbReference>
<dbReference type="InterPro" id="IPR006121">
    <property type="entry name" value="HMA_dom"/>
</dbReference>
<dbReference type="InterPro" id="IPR036163">
    <property type="entry name" value="HMA_dom_sf"/>
</dbReference>
<dbReference type="InterPro" id="IPR027256">
    <property type="entry name" value="P-typ_ATPase_IB"/>
</dbReference>
<dbReference type="InterPro" id="IPR001757">
    <property type="entry name" value="P_typ_ATPase"/>
</dbReference>
<dbReference type="InterPro" id="IPR044492">
    <property type="entry name" value="P_typ_ATPase_HD_dom"/>
</dbReference>
<dbReference type="NCBIfam" id="TIGR01525">
    <property type="entry name" value="ATPase-IB_hvy"/>
    <property type="match status" value="1"/>
</dbReference>
<dbReference type="NCBIfam" id="TIGR01494">
    <property type="entry name" value="ATPase_P-type"/>
    <property type="match status" value="2"/>
</dbReference>
<dbReference type="NCBIfam" id="TIGR00003">
    <property type="entry name" value="copper ion binding protein"/>
    <property type="match status" value="6"/>
</dbReference>
<dbReference type="PANTHER" id="PTHR46594">
    <property type="entry name" value="P-TYPE CATION-TRANSPORTING ATPASE"/>
    <property type="match status" value="1"/>
</dbReference>
<dbReference type="PANTHER" id="PTHR46594:SF4">
    <property type="entry name" value="P-TYPE CATION-TRANSPORTING ATPASE"/>
    <property type="match status" value="1"/>
</dbReference>
<dbReference type="Pfam" id="PF00122">
    <property type="entry name" value="E1-E2_ATPase"/>
    <property type="match status" value="1"/>
</dbReference>
<dbReference type="Pfam" id="PF00403">
    <property type="entry name" value="HMA"/>
    <property type="match status" value="6"/>
</dbReference>
<dbReference type="Pfam" id="PF00702">
    <property type="entry name" value="Hydrolase"/>
    <property type="match status" value="1"/>
</dbReference>
<dbReference type="PRINTS" id="PR00119">
    <property type="entry name" value="CATATPASE"/>
</dbReference>
<dbReference type="PRINTS" id="PR00942">
    <property type="entry name" value="CUATPASEI"/>
</dbReference>
<dbReference type="SFLD" id="SFLDG00002">
    <property type="entry name" value="C1.7:_P-type_atpase_like"/>
    <property type="match status" value="1"/>
</dbReference>
<dbReference type="SFLD" id="SFLDF00027">
    <property type="entry name" value="p-type_atpase"/>
    <property type="match status" value="1"/>
</dbReference>
<dbReference type="SUPFAM" id="SSF81653">
    <property type="entry name" value="Calcium ATPase, transduction domain A"/>
    <property type="match status" value="1"/>
</dbReference>
<dbReference type="SUPFAM" id="SSF81665">
    <property type="entry name" value="Calcium ATPase, transmembrane domain M"/>
    <property type="match status" value="1"/>
</dbReference>
<dbReference type="SUPFAM" id="SSF56784">
    <property type="entry name" value="HAD-like"/>
    <property type="match status" value="1"/>
</dbReference>
<dbReference type="SUPFAM" id="SSF55008">
    <property type="entry name" value="HMA, heavy metal-associated domain"/>
    <property type="match status" value="6"/>
</dbReference>
<dbReference type="SUPFAM" id="SSF81660">
    <property type="entry name" value="Metal cation-transporting ATPase, ATP-binding domain N"/>
    <property type="match status" value="1"/>
</dbReference>
<dbReference type="PROSITE" id="PS00154">
    <property type="entry name" value="ATPASE_E1_E2"/>
    <property type="match status" value="1"/>
</dbReference>
<dbReference type="PROSITE" id="PS01047">
    <property type="entry name" value="HMA_1"/>
    <property type="match status" value="6"/>
</dbReference>
<dbReference type="PROSITE" id="PS50846">
    <property type="entry name" value="HMA_2"/>
    <property type="match status" value="7"/>
</dbReference>
<sequence>MDPSMGVNSVTISVEGMTCNSCVWTIEQQIGKVNGVHHIKVSLEEKNATIIYDPKLQTPKTLQEAIDDMGFDAVIHNPDPLPVLTDTLFLTVTASLTLPWDHIQSTLLKTKGVTDIKIYPQKRTVAVTIIPSIVNANQIKELVPELSLDTGTLEKKSGACEDHSMAQAGEVVLKMKVEGMTCHSCTSTIEGKIGKLQGVQRIKVSLDNQEATIVYQPHLISVEEMKKQIEAMGFPAFVKKQPKYLKLGAIDVERLKNTPVKSSEGSQQRSPSYTNDSTATFIIDGMHCKSCVSNIESTLSALQYVSSIVVSLENRSAIVKYNASSVTPESLRKAIEAVSPGLYRVSITSEVESTSNSPSSSSLQKIPLNVVSQPLTQETVINIDGMTCNSCVQSIEGVISKKPGVKSIRVSLANSNGTVEYDPLLTSPETLRGAIEDMGFDATLSDTNEPLVVIAQPSSEMPLLTSTNEFYTKGMTPVQDKEEGKNSSKCYIQVTGMTCASCVANIERNLRREEGIYSILVALMAGKAEVRYNPAVIQPPMIAEFIRELGFGATVIENADEGDGVLELVVRGMTCASCVHKIESSLTKHRGILYCSVALATNKAHIKYDPEIIGPRDIIHTIESLGFEASLVKKDRSASHLDHKREIRQWRRSFLVSLFFCIPVMGLMIYMMVMDHHFATLHHNQNMSKEEMINLHSSMFLERQILPGLSVMNLLSFLLCVPVQFFGGWYFYIQAYKALKHKTANMDVLIVLATTIAFAYSLIILLVAMYERAKVNPITFFDTPPMLFVFIALGRWLEHIAKGKTSEALAKLISLQATEATIVTLDSDNILLSEEQVDVELVQRGDIIKVVPGGKFPVDGRVIEGHSMVDESLITGEAMPVAKKPGSTVIAGSINQNGSLLICATHVGADTTLSQIVKLVEEAQTSKAPIQQFADKLSGYFVPFIVFVSIATLLVWIVIGFLNFEIVETYFPGYNRSISRTETIIRFAFQASITVLCIACPCSLGLATPTAVMVGTGVGAQNGILIKGGEPLEMAHKVKVVVFDKTGTITHGTPVVNQVKVLTESNRISHHKILAIVGTAESNSEHPLGTAITKYCKQELDTETLGTCIDFQVVPGCGISCKVTNIEGLLHKNNWNIEDNNIKNASLVQIDASNEQSSTSSSMIIDAQISNALNAQQYKVLIGNREWMIRNGLVINNDVNDFMTEHERKGRTAVLVAVDDELCGLIAIADTVKPEAELAIHILKSMGLEVVLMTGDNSKTARSIASQVGITKVFAEVLPSHKVAKVKQLQEEGKRVAMVGDGINDSPALAMANVGIAIGTGTDVAIEAADVVLIRNDLLDVVASIDLSRKTVKRIRINFVFALIYNLVGIPIAAGVFMPIGLVLQPWMGSAAMAASSVSVVLSSLFLKLYRKPTYESYELPARSQIGQKSPSEISVHVGIDDTSRNSPKLGLLDRIVNYSRASINSLLSDKRSLNSVVTSEPDKHSLLVGDFREDDDTAL</sequence>
<name>ATP7A_HUMAN</name>
<reference key="1">
    <citation type="journal article" date="1993" name="Nat. Genet.">
        <title>Isolation of a candidate gene for Menkes disease and evidence that it encodes a copper-transporting ATPase.</title>
        <authorList>
            <person name="Vulpe C.D."/>
            <person name="Levinson B."/>
            <person name="Whitney S."/>
            <person name="Packman S."/>
            <person name="Gitschier J."/>
        </authorList>
    </citation>
    <scope>NUCLEOTIDE SEQUENCE [MRNA] (ISOFORM 4)</scope>
    <scope>VARIANT THR-669</scope>
    <scope>TISSUE SPECIFICITY</scope>
    <source>
        <tissue>Fibroblast</tissue>
    </source>
</reference>
<reference key="2">
    <citation type="journal article" date="1993" name="Nat. Genet.">
        <authorList>
            <person name="Vulpe C.D."/>
            <person name="Levinson B."/>
            <person name="Whitney S."/>
            <person name="Packman S."/>
            <person name="Gitschier J."/>
        </authorList>
    </citation>
    <scope>ERRATUM OF PUBMED:8490659</scope>
</reference>
<reference key="3">
    <citation type="journal article" date="1995" name="Genomics">
        <title>Characterization of the exon structure of the Menkes disease gene using vectorette PCR.</title>
        <authorList>
            <person name="Tuemer Z."/>
            <person name="Vural B."/>
            <person name="Toennesen T."/>
            <person name="Chelly J."/>
            <person name="Monaco A.P."/>
            <person name="Horn N."/>
        </authorList>
    </citation>
    <scope>NUCLEOTIDE SEQUENCE [GENOMIC DNA] (ISOFORM 4)</scope>
    <scope>VARIANT THR-669</scope>
</reference>
<reference key="4">
    <citation type="journal article" date="1998" name="Biochem. J.">
        <title>Multiple transcripts coding for the menkes gene: evidence for alternative splicing of Menkes mRNA.</title>
        <authorList>
            <person name="Reddy M.C."/>
            <person name="Harris E.D."/>
        </authorList>
    </citation>
    <scope>NUCLEOTIDE SEQUENCE [MRNA] (ISOFORM 3)</scope>
    <scope>TISSUE SPECIFICITY (ISOFORM 3)</scope>
    <source>
        <tissue>Fibroblast</tissue>
    </source>
</reference>
<reference key="5">
    <citation type="journal article" date="1999" name="Adv. Exp. Med. Biol.">
        <title>Multiple forms of the Menkes Cu-ATPase.</title>
        <authorList>
            <person name="Harris E.D."/>
            <person name="Reddy M.C."/>
            <person name="Qian Y."/>
            <person name="Tiffany-Castiglioni E."/>
            <person name="Majumdar S."/>
            <person name="Nelson J."/>
        </authorList>
    </citation>
    <scope>NUCLEOTIDE SEQUENCE [MRNA] (ISOFORMS 1; 2 AND 3)</scope>
    <source>
        <tissue>Colon carcinoma</tissue>
        <tissue>Fibroblast</tissue>
    </source>
</reference>
<reference key="6">
    <citation type="journal article" date="2005" name="Nature">
        <title>The DNA sequence of the human X chromosome.</title>
        <authorList>
            <person name="Ross M.T."/>
            <person name="Grafham D.V."/>
            <person name="Coffey A.J."/>
            <person name="Scherer S."/>
            <person name="McLay K."/>
            <person name="Muzny D."/>
            <person name="Platzer M."/>
            <person name="Howell G.R."/>
            <person name="Burrows C."/>
            <person name="Bird C.P."/>
            <person name="Frankish A."/>
            <person name="Lovell F.L."/>
            <person name="Howe K.L."/>
            <person name="Ashurst J.L."/>
            <person name="Fulton R.S."/>
            <person name="Sudbrak R."/>
            <person name="Wen G."/>
            <person name="Jones M.C."/>
            <person name="Hurles M.E."/>
            <person name="Andrews T.D."/>
            <person name="Scott C.E."/>
            <person name="Searle S."/>
            <person name="Ramser J."/>
            <person name="Whittaker A."/>
            <person name="Deadman R."/>
            <person name="Carter N.P."/>
            <person name="Hunt S.E."/>
            <person name="Chen R."/>
            <person name="Cree A."/>
            <person name="Gunaratne P."/>
            <person name="Havlak P."/>
            <person name="Hodgson A."/>
            <person name="Metzker M.L."/>
            <person name="Richards S."/>
            <person name="Scott G."/>
            <person name="Steffen D."/>
            <person name="Sodergren E."/>
            <person name="Wheeler D.A."/>
            <person name="Worley K.C."/>
            <person name="Ainscough R."/>
            <person name="Ambrose K.D."/>
            <person name="Ansari-Lari M.A."/>
            <person name="Aradhya S."/>
            <person name="Ashwell R.I."/>
            <person name="Babbage A.K."/>
            <person name="Bagguley C.L."/>
            <person name="Ballabio A."/>
            <person name="Banerjee R."/>
            <person name="Barker G.E."/>
            <person name="Barlow K.F."/>
            <person name="Barrett I.P."/>
            <person name="Bates K.N."/>
            <person name="Beare D.M."/>
            <person name="Beasley H."/>
            <person name="Beasley O."/>
            <person name="Beck A."/>
            <person name="Bethel G."/>
            <person name="Blechschmidt K."/>
            <person name="Brady N."/>
            <person name="Bray-Allen S."/>
            <person name="Bridgeman A.M."/>
            <person name="Brown A.J."/>
            <person name="Brown M.J."/>
            <person name="Bonnin D."/>
            <person name="Bruford E.A."/>
            <person name="Buhay C."/>
            <person name="Burch P."/>
            <person name="Burford D."/>
            <person name="Burgess J."/>
            <person name="Burrill W."/>
            <person name="Burton J."/>
            <person name="Bye J.M."/>
            <person name="Carder C."/>
            <person name="Carrel L."/>
            <person name="Chako J."/>
            <person name="Chapman J.C."/>
            <person name="Chavez D."/>
            <person name="Chen E."/>
            <person name="Chen G."/>
            <person name="Chen Y."/>
            <person name="Chen Z."/>
            <person name="Chinault C."/>
            <person name="Ciccodicola A."/>
            <person name="Clark S.Y."/>
            <person name="Clarke G."/>
            <person name="Clee C.M."/>
            <person name="Clegg S."/>
            <person name="Clerc-Blankenburg K."/>
            <person name="Clifford K."/>
            <person name="Cobley V."/>
            <person name="Cole C.G."/>
            <person name="Conquer J.S."/>
            <person name="Corby N."/>
            <person name="Connor R.E."/>
            <person name="David R."/>
            <person name="Davies J."/>
            <person name="Davis C."/>
            <person name="Davis J."/>
            <person name="Delgado O."/>
            <person name="Deshazo D."/>
            <person name="Dhami P."/>
            <person name="Ding Y."/>
            <person name="Dinh H."/>
            <person name="Dodsworth S."/>
            <person name="Draper H."/>
            <person name="Dugan-Rocha S."/>
            <person name="Dunham A."/>
            <person name="Dunn M."/>
            <person name="Durbin K.J."/>
            <person name="Dutta I."/>
            <person name="Eades T."/>
            <person name="Ellwood M."/>
            <person name="Emery-Cohen A."/>
            <person name="Errington H."/>
            <person name="Evans K.L."/>
            <person name="Faulkner L."/>
            <person name="Francis F."/>
            <person name="Frankland J."/>
            <person name="Fraser A.E."/>
            <person name="Galgoczy P."/>
            <person name="Gilbert J."/>
            <person name="Gill R."/>
            <person name="Gloeckner G."/>
            <person name="Gregory S.G."/>
            <person name="Gribble S."/>
            <person name="Griffiths C."/>
            <person name="Grocock R."/>
            <person name="Gu Y."/>
            <person name="Gwilliam R."/>
            <person name="Hamilton C."/>
            <person name="Hart E.A."/>
            <person name="Hawes A."/>
            <person name="Heath P.D."/>
            <person name="Heitmann K."/>
            <person name="Hennig S."/>
            <person name="Hernandez J."/>
            <person name="Hinzmann B."/>
            <person name="Ho S."/>
            <person name="Hoffs M."/>
            <person name="Howden P.J."/>
            <person name="Huckle E.J."/>
            <person name="Hume J."/>
            <person name="Hunt P.J."/>
            <person name="Hunt A.R."/>
            <person name="Isherwood J."/>
            <person name="Jacob L."/>
            <person name="Johnson D."/>
            <person name="Jones S."/>
            <person name="de Jong P.J."/>
            <person name="Joseph S.S."/>
            <person name="Keenan S."/>
            <person name="Kelly S."/>
            <person name="Kershaw J.K."/>
            <person name="Khan Z."/>
            <person name="Kioschis P."/>
            <person name="Klages S."/>
            <person name="Knights A.J."/>
            <person name="Kosiura A."/>
            <person name="Kovar-Smith C."/>
            <person name="Laird G.K."/>
            <person name="Langford C."/>
            <person name="Lawlor S."/>
            <person name="Leversha M."/>
            <person name="Lewis L."/>
            <person name="Liu W."/>
            <person name="Lloyd C."/>
            <person name="Lloyd D.M."/>
            <person name="Loulseged H."/>
            <person name="Loveland J.E."/>
            <person name="Lovell J.D."/>
            <person name="Lozado R."/>
            <person name="Lu J."/>
            <person name="Lyne R."/>
            <person name="Ma J."/>
            <person name="Maheshwari M."/>
            <person name="Matthews L.H."/>
            <person name="McDowall J."/>
            <person name="McLaren S."/>
            <person name="McMurray A."/>
            <person name="Meidl P."/>
            <person name="Meitinger T."/>
            <person name="Milne S."/>
            <person name="Miner G."/>
            <person name="Mistry S.L."/>
            <person name="Morgan M."/>
            <person name="Morris S."/>
            <person name="Mueller I."/>
            <person name="Mullikin J.C."/>
            <person name="Nguyen N."/>
            <person name="Nordsiek G."/>
            <person name="Nyakatura G."/>
            <person name="O'dell C.N."/>
            <person name="Okwuonu G."/>
            <person name="Palmer S."/>
            <person name="Pandian R."/>
            <person name="Parker D."/>
            <person name="Parrish J."/>
            <person name="Pasternak S."/>
            <person name="Patel D."/>
            <person name="Pearce A.V."/>
            <person name="Pearson D.M."/>
            <person name="Pelan S.E."/>
            <person name="Perez L."/>
            <person name="Porter K.M."/>
            <person name="Ramsey Y."/>
            <person name="Reichwald K."/>
            <person name="Rhodes S."/>
            <person name="Ridler K.A."/>
            <person name="Schlessinger D."/>
            <person name="Schueler M.G."/>
            <person name="Sehra H.K."/>
            <person name="Shaw-Smith C."/>
            <person name="Shen H."/>
            <person name="Sheridan E.M."/>
            <person name="Shownkeen R."/>
            <person name="Skuce C.D."/>
            <person name="Smith M.L."/>
            <person name="Sotheran E.C."/>
            <person name="Steingruber H.E."/>
            <person name="Steward C.A."/>
            <person name="Storey R."/>
            <person name="Swann R.M."/>
            <person name="Swarbreck D."/>
            <person name="Tabor P.E."/>
            <person name="Taudien S."/>
            <person name="Taylor T."/>
            <person name="Teague B."/>
            <person name="Thomas K."/>
            <person name="Thorpe A."/>
            <person name="Timms K."/>
            <person name="Tracey A."/>
            <person name="Trevanion S."/>
            <person name="Tromans A.C."/>
            <person name="d'Urso M."/>
            <person name="Verduzco D."/>
            <person name="Villasana D."/>
            <person name="Waldron L."/>
            <person name="Wall M."/>
            <person name="Wang Q."/>
            <person name="Warren J."/>
            <person name="Warry G.L."/>
            <person name="Wei X."/>
            <person name="West A."/>
            <person name="Whitehead S.L."/>
            <person name="Whiteley M.N."/>
            <person name="Wilkinson J.E."/>
            <person name="Willey D.L."/>
            <person name="Williams G."/>
            <person name="Williams L."/>
            <person name="Williamson A."/>
            <person name="Williamson H."/>
            <person name="Wilming L."/>
            <person name="Woodmansey R.L."/>
            <person name="Wray P.W."/>
            <person name="Yen J."/>
            <person name="Zhang J."/>
            <person name="Zhou J."/>
            <person name="Zoghbi H."/>
            <person name="Zorilla S."/>
            <person name="Buck D."/>
            <person name="Reinhardt R."/>
            <person name="Poustka A."/>
            <person name="Rosenthal A."/>
            <person name="Lehrach H."/>
            <person name="Meindl A."/>
            <person name="Minx P.J."/>
            <person name="Hillier L.W."/>
            <person name="Willard H.F."/>
            <person name="Wilson R.K."/>
            <person name="Waterston R.H."/>
            <person name="Rice C.M."/>
            <person name="Vaudin M."/>
            <person name="Coulson A."/>
            <person name="Nelson D.L."/>
            <person name="Weinstock G."/>
            <person name="Sulston J.E."/>
            <person name="Durbin R.M."/>
            <person name="Hubbard T."/>
            <person name="Gibbs R.A."/>
            <person name="Beck S."/>
            <person name="Rogers J."/>
            <person name="Bentley D.R."/>
        </authorList>
    </citation>
    <scope>NUCLEOTIDE SEQUENCE [LARGE SCALE GENOMIC DNA]</scope>
    <scope>VARIANT GLU-1350</scope>
</reference>
<reference key="7">
    <citation type="submission" date="2005-09" db="EMBL/GenBank/DDBJ databases">
        <authorList>
            <person name="Mural R.J."/>
            <person name="Istrail S."/>
            <person name="Sutton G.G."/>
            <person name="Florea L."/>
            <person name="Halpern A.L."/>
            <person name="Mobarry C.M."/>
            <person name="Lippert R."/>
            <person name="Walenz B."/>
            <person name="Shatkay H."/>
            <person name="Dew I."/>
            <person name="Miller J.R."/>
            <person name="Flanigan M.J."/>
            <person name="Edwards N.J."/>
            <person name="Bolanos R."/>
            <person name="Fasulo D."/>
            <person name="Halldorsson B.V."/>
            <person name="Hannenhalli S."/>
            <person name="Turner R."/>
            <person name="Yooseph S."/>
            <person name="Lu F."/>
            <person name="Nusskern D.R."/>
            <person name="Shue B.C."/>
            <person name="Zheng X.H."/>
            <person name="Zhong F."/>
            <person name="Delcher A.L."/>
            <person name="Huson D.H."/>
            <person name="Kravitz S.A."/>
            <person name="Mouchard L."/>
            <person name="Reinert K."/>
            <person name="Remington K.A."/>
            <person name="Clark A.G."/>
            <person name="Waterman M.S."/>
            <person name="Eichler E.E."/>
            <person name="Adams M.D."/>
            <person name="Hunkapiller M.W."/>
            <person name="Myers E.W."/>
            <person name="Venter J.C."/>
        </authorList>
    </citation>
    <scope>NUCLEOTIDE SEQUENCE [LARGE SCALE GENOMIC DNA]</scope>
    <scope>VARIANT GLU-1350</scope>
</reference>
<reference key="8">
    <citation type="journal article" date="1995" name="Genomics">
        <title>Molecular structure of the Menkes disease gene (ATP7A).</title>
        <authorList>
            <person name="Dierick H.A."/>
            <person name="Ambrosini L."/>
            <person name="Spencer J."/>
            <person name="Glover T.W."/>
            <person name="Mercer J.F.B."/>
        </authorList>
    </citation>
    <scope>NUCLEOTIDE SEQUENCE [GENOMIC DNA] OF 1-1447 (ISOFORM 4)</scope>
</reference>
<reference key="9">
    <citation type="journal article" date="1993" name="Nat. Genet.">
        <title>Isolation of a candidate gene for Menkes disease that encodes a potential heavy metal binding protein.</title>
        <authorList>
            <person name="Chelly J."/>
            <person name="Tuemer Z."/>
            <person name="Toennesen T."/>
            <person name="Petterson A."/>
            <person name="Ishikawa-Brush Y."/>
            <person name="Tommerup N."/>
            <person name="Horn N."/>
            <person name="Monaco A.P."/>
        </authorList>
    </citation>
    <scope>NUCLEOTIDE SEQUENCE [MRNA] OF 1-626 (ISOFORM 4)</scope>
    <scope>TISSUE SPECIFICITY</scope>
    <source>
        <tissue>Kidney</tissue>
    </source>
</reference>
<reference key="10">
    <citation type="journal article" date="1993" name="Nat. Genet.">
        <title>Isolation of a partial candidate gene for Menkes disease by positional cloning.</title>
        <authorList>
            <person name="Mercer J.F.B."/>
            <person name="Livingston J."/>
            <person name="Hall B."/>
            <person name="Paynter J.A."/>
            <person name="Begy C."/>
            <person name="Chandrasekharappa S."/>
            <person name="Lockhart P."/>
            <person name="Grimes A."/>
            <person name="Bhave M."/>
            <person name="Siemieniak D."/>
            <person name="Glover T.W."/>
        </authorList>
    </citation>
    <scope>NUCLEOTIDE SEQUENCE [MRNA] OF 12-529 (ISOFORM 4)</scope>
    <source>
        <tissue>Endothelial cell</tissue>
    </source>
</reference>
<reference key="11">
    <citation type="journal article" date="2001" name="Nature">
        <title>Molecular phylogenetics and the origins of placental mammals.</title>
        <authorList>
            <person name="Murphy W.J."/>
            <person name="Eizirik E."/>
            <person name="Johnson W.E."/>
            <person name="Zhang Y.-P."/>
            <person name="Ryder O.A."/>
            <person name="O'Brien S.J."/>
        </authorList>
    </citation>
    <scope>NUCLEOTIDE SEQUENCE [GENOMIC DNA] OF 213-437</scope>
</reference>
<reference key="12">
    <citation type="journal article" date="1998" name="Hum. Mol. Genet.">
        <title>Constitutive skipping of alternatively spliced exon 10 in the ATP7A gene abolishes Golgi localization of the menkes protein and produces the occipital horn syndrome.</title>
        <authorList>
            <person name="Qi M."/>
            <person name="Byers P.H."/>
        </authorList>
    </citation>
    <scope>ALTERNATIVE SPLICING (ISOFORM 5)</scope>
    <scope>SUBCELLULAR LOCATION</scope>
</reference>
<reference key="13">
    <citation type="journal article" date="2000" name="Biochem. J.">
        <title>Evidence for a Menkes-like protein with a nuclear targeting sequence.</title>
        <authorList>
            <person name="Reddy M.C."/>
            <person name="Majumdar S."/>
            <person name="Harris E.D."/>
        </authorList>
    </citation>
    <scope>ALTERNATIVE SPLICING (ISOFORM 6)</scope>
    <source>
        <tissue>Neuroblastoma</tissue>
    </source>
</reference>
<reference key="14">
    <citation type="journal article" date="1997" name="Hum. Mol. Genet.">
        <title>Immunocytochemical localization of the Menkes copper transport protein (ATP7A) to the trans-Golgi network.</title>
        <authorList>
            <person name="Dierick H.A."/>
            <person name="Adam A.N."/>
            <person name="Escara-Wilke J.F."/>
            <person name="Glover T.W."/>
        </authorList>
    </citation>
    <scope>SUBCELLULAR LOCATION</scope>
</reference>
<reference key="15">
    <citation type="journal article" date="1999" name="Hum. Mol. Genet.">
        <title>The Menkes protein (ATP7A; MNK) cycles via the plasma membrane both in basal and elevated extracellular copper using a C-terminal di-leucine endocytic signal.</title>
        <authorList>
            <person name="Petris M.J."/>
            <person name="Mercer J.F.B."/>
        </authorList>
    </citation>
    <scope>SUBCELLULAR LOCATION</scope>
    <scope>MUTAGENESIS OF LEUCINE RESIDUES</scope>
</reference>
<reference key="16">
    <citation type="journal article" date="1999" name="J. Biol. Chem.">
        <title>Functional analysis of the N-terminal CXXC metal-binding motifs in the human Menkes copper-transporting P-type ATPase expressed in cultured mammalian cells.</title>
        <authorList>
            <person name="Voskoboinik I."/>
            <person name="Strausak D."/>
            <person name="Greenough M."/>
            <person name="Brooks H."/>
            <person name="Petris M."/>
            <person name="Smith S."/>
            <person name="Mercer J.F."/>
            <person name="Camakaris J."/>
        </authorList>
    </citation>
    <scope>FUNCTION</scope>
    <scope>CATALYTIC ACTIVITY</scope>
    <scope>BIOPHYSICOCHEMICAL PROPERTIES</scope>
    <scope>DOMAIN</scope>
</reference>
<reference key="17">
    <citation type="journal article" date="2000" name="Hum. Mol. Genet.">
        <title>The Menkes copper transporter is required for the activation of tyrosinase.</title>
        <authorList>
            <person name="Petris M.J."/>
            <person name="Strausak D."/>
            <person name="Mercer J.F."/>
        </authorList>
    </citation>
    <scope>FUNCTION</scope>
    <scope>MUTAGENESIS OF ASP-1044</scope>
</reference>
<reference key="18">
    <citation type="journal article" date="2005" name="J. Biol. Chem.">
        <title>A single PDZ domain protein interacts with the Menkes copper ATPase, ATP7A. A new protein implicated in copper homeostasis.</title>
        <authorList>
            <person name="Stephenson S.E."/>
            <person name="Dubach D."/>
            <person name="Lim C.M."/>
            <person name="Mercer J.F."/>
            <person name="La Fontaine S."/>
        </authorList>
    </citation>
    <scope>INTERACTION WITH PDZD11</scope>
</reference>
<reference key="19">
    <citation type="journal article" date="2006" name="FASEB J.">
        <title>Essential role for the Menkes ATPase in activation of extracellular superoxide dismutase: implication for vascular oxidative stress.</title>
        <authorList>
            <person name="Qin Z."/>
            <person name="Itoh S."/>
            <person name="Jeney V."/>
            <person name="Ushio-Fukai M."/>
            <person name="Fukai T."/>
        </authorList>
    </citation>
    <scope>TISSUE SPECIFICITY</scope>
    <scope>INTERACTION WITH SOD3</scope>
</reference>
<reference key="20">
    <citation type="journal article" date="2009" name="Sci. Signal.">
        <title>Quantitative phosphoproteomic analysis of T cell receptor signaling reveals system-wide modulation of protein-protein interactions.</title>
        <authorList>
            <person name="Mayya V."/>
            <person name="Lundgren D.H."/>
            <person name="Hwang S.-I."/>
            <person name="Rezaul K."/>
            <person name="Wu L."/>
            <person name="Eng J.K."/>
            <person name="Rodionov V."/>
            <person name="Han D.K."/>
        </authorList>
    </citation>
    <scope>IDENTIFICATION BY MASS SPECTROMETRY [LARGE SCALE ANALYSIS]</scope>
    <source>
        <tissue>Leukemic T-cell</tissue>
    </source>
</reference>
<reference key="21">
    <citation type="journal article" date="2010" name="Sci. Signal.">
        <title>Quantitative phosphoproteomics reveals widespread full phosphorylation site occupancy during mitosis.</title>
        <authorList>
            <person name="Olsen J.V."/>
            <person name="Vermeulen M."/>
            <person name="Santamaria A."/>
            <person name="Kumar C."/>
            <person name="Miller M.L."/>
            <person name="Jensen L.J."/>
            <person name="Gnad F."/>
            <person name="Cox J."/>
            <person name="Jensen T.S."/>
            <person name="Nigg E.A."/>
            <person name="Brunak S."/>
            <person name="Mann M."/>
        </authorList>
    </citation>
    <scope>PHOSPHORYLATION [LARGE SCALE ANALYSIS] AT SER-339</scope>
    <scope>IDENTIFICATION BY MASS SPECTROMETRY [LARGE SCALE ANALYSIS]</scope>
    <source>
        <tissue>Cervix carcinoma</tissue>
    </source>
</reference>
<reference key="22">
    <citation type="journal article" date="2012" name="Cell. Mol. Life Sci.">
        <title>The copper-transporting capacity of ATP7A mutants associated with Menkes disease is ameliorated by COMMD1 as a result of improved protein expression.</title>
        <authorList>
            <person name="Vonk W.I."/>
            <person name="de Bie P."/>
            <person name="Wichers C.G."/>
            <person name="van den Berghe P.V."/>
            <person name="van der Plaats R."/>
            <person name="Berger R."/>
            <person name="Wijmenga C."/>
            <person name="Klomp L.W."/>
            <person name="van de Sluis B."/>
        </authorList>
    </citation>
    <scope>INTERACTION WITH ATOX1 AND COMMD1</scope>
    <scope>CHARACTERIZATION OF VARIANT OHS SER-1304</scope>
    <scope>CHARACTERIZATION OF VARIANTS MNK ARG-873; ARG-1000 AND ASP-1362</scope>
</reference>
<reference key="23">
    <citation type="journal article" date="2013" name="J. Proteome Res.">
        <title>Toward a comprehensive characterization of a human cancer cell phosphoproteome.</title>
        <authorList>
            <person name="Zhou H."/>
            <person name="Di Palma S."/>
            <person name="Preisinger C."/>
            <person name="Peng M."/>
            <person name="Polat A.N."/>
            <person name="Heck A.J."/>
            <person name="Mohammed S."/>
        </authorList>
    </citation>
    <scope>PHOSPHORYLATION [LARGE SCALE ANALYSIS] AT THR-152; SER-270; THR-327; SER-339; SER-357; SER-1460; SER-1463; SER-1466; SER-1469 AND SER-1473</scope>
    <scope>IDENTIFICATION BY MASS SPECTROMETRY [LARGE SCALE ANALYSIS]</scope>
    <source>
        <tissue>Cervix carcinoma</tissue>
        <tissue>Erythroleukemia</tissue>
    </source>
</reference>
<reference key="24">
    <citation type="journal article" date="2014" name="J. Proteomics">
        <title>An enzyme assisted RP-RPLC approach for in-depth analysis of human liver phosphoproteome.</title>
        <authorList>
            <person name="Bian Y."/>
            <person name="Song C."/>
            <person name="Cheng K."/>
            <person name="Dong M."/>
            <person name="Wang F."/>
            <person name="Huang J."/>
            <person name="Sun D."/>
            <person name="Wang L."/>
            <person name="Ye M."/>
            <person name="Zou H."/>
        </authorList>
    </citation>
    <scope>PHOSPHORYLATION [LARGE SCALE ANALYSIS] AT SER-1430 AND SER-1432</scope>
    <scope>IDENTIFICATION BY MASS SPECTROMETRY [LARGE SCALE ANALYSIS]</scope>
    <source>
        <tissue>Liver</tissue>
    </source>
</reference>
<reference key="25">
    <citation type="journal article" date="1998" name="Nat. Struct. Biol.">
        <title>Solution structure of the fourth metal-binding domain from the Menkes copper-transporting ATPase.</title>
        <authorList>
            <person name="Gitschier J."/>
            <person name="Moffat B."/>
            <person name="Reilly D."/>
            <person name="Wood W.I."/>
            <person name="Fairbrother W.J."/>
        </authorList>
    </citation>
    <scope>STRUCTURE BY NMR OF 375-446</scope>
</reference>
<reference key="26">
    <citation type="journal article" date="2009" name="Biochem. J.">
        <title>Copper(I)-mediated protein-protein interactions result from suboptimal interaction surfaces.</title>
        <authorList>
            <person name="Banci L."/>
            <person name="Bertini I."/>
            <person name="Calderone V."/>
            <person name="Della-Malva N."/>
            <person name="Felli I.C."/>
            <person name="Neri S."/>
            <person name="Pavelkova A."/>
            <person name="Rosato A."/>
        </authorList>
    </citation>
    <scope>X-RAY CRYSTALLOGRAPHY (1.80 ANGSTROMS) OF 7-77</scope>
    <scope>DOMAIN</scope>
    <scope>INTERACTION WITH ATOX1</scope>
    <scope>FUNCTION</scope>
</reference>
<reference key="27">
    <citation type="journal article" date="2010" name="J. Biol. Chem.">
        <title>The binding mode of ATP revealed by the solution structure of the N-domain of human ATP7A.</title>
        <authorList>
            <person name="Banci L."/>
            <person name="Bertini I."/>
            <person name="Cantini F."/>
            <person name="Inagaki S."/>
            <person name="Migliardi M."/>
            <person name="Rosato A."/>
        </authorList>
    </citation>
    <scope>STRUCTURE BY NMR OF 1051-1231</scope>
    <scope>DOMAIN</scope>
    <scope>FUNCTION</scope>
</reference>
<reference key="28">
    <citation type="journal article" date="2019" name="J. Am. Chem. Soc.">
        <title>Mechanistic and Structural Basis for Inhibition of Copper Trafficking by Platinum Anticancer Drugs.</title>
        <authorList>
            <person name="Lasorsa A."/>
            <person name="Nardella M.I."/>
            <person name="Rosato A."/>
            <person name="Mirabelli V."/>
            <person name="Caliandro R."/>
            <person name="Caliandro R."/>
            <person name="Natile G."/>
            <person name="Arnesano F."/>
        </authorList>
    </citation>
    <scope>X-RAY CRYSTALLOGRAPHY (2.83 ANGSTROMS) OF 7-77 IN COMPLEX WITH COPPER AND ATOX1</scope>
    <scope>DOMAIN</scope>
    <scope>FUNCTION</scope>
    <scope>MUTAGENESIS OF CYS-22</scope>
</reference>
<reference key="29">
    <citation type="journal article" date="1999" name="Adv. Exp. Med. Biol.">
        <title>Mutation spectrum of ATP7A, the gene defective in Menkes disease.</title>
        <authorList>
            <person name="Tuemer Z."/>
            <person name="Moeller L.B."/>
            <person name="Horn N."/>
        </authorList>
    </citation>
    <scope>REVIEW</scope>
    <scope>VARIANTS MNK</scope>
</reference>
<reference key="30">
    <citation type="journal article" date="1994" name="Am. J. Hum. Genet.">
        <title>Diverse mutations in patients with Menkes disease often lead to exon skipping.</title>
        <authorList>
            <person name="Das S."/>
            <person name="Levinson B."/>
            <person name="Whitney S."/>
            <person name="Vulpe C."/>
            <person name="Packman S."/>
            <person name="Gitschier J."/>
        </authorList>
    </citation>
    <scope>VARIANT LEU-767</scope>
    <scope>VARIANT MNK ARG-1302</scope>
</reference>
<reference key="31">
    <citation type="journal article" date="1997" name="Am. J. Hum. Genet.">
        <title>Identification of point mutations in 41 unrelated patients affected with Menkes disease.</title>
        <authorList>
            <person name="Tuemer Z."/>
            <person name="Lund C."/>
            <person name="Tolshave J."/>
            <person name="Vural B."/>
            <person name="Toennesen T."/>
            <person name="Horn N."/>
        </authorList>
    </citation>
    <scope>VARIANTS MNK PRO-629; ARG-727; PRO-1006 AND ASP-1019</scope>
</reference>
<reference key="32">
    <citation type="journal article" date="1997" name="Am. J. Hum. Genet.">
        <title>A C2055T transition in exon 8 of the ATP7A gene is associated with exon skipping in an occipital horn syndrome family.</title>
        <authorList>
            <person name="Ronce N."/>
            <person name="Moizard M.P."/>
            <person name="Robb L."/>
            <person name="Toutain A."/>
            <person name="Villard L."/>
            <person name="Moraine C."/>
        </authorList>
    </citation>
    <scope>VARIANT OHS LEU-637</scope>
</reference>
<reference key="33">
    <citation type="journal article" date="1999" name="Hum. Mol. Genet.">
        <title>Defective copper-induced trafficking and localization of the Menkes protein in patients with mild and copper-treated classical Menkes disease.</title>
        <authorList>
            <person name="Ambrosini L."/>
            <person name="Mercer J.F.B."/>
        </authorList>
    </citation>
    <scope>VARIANT MNK VAL-1362</scope>
</reference>
<reference key="34">
    <citation type="journal article" date="1999" name="J. Hum. Genet.">
        <title>Identification of three novel mutations in the MNK gene in three unrelated Japanese patients with classical Menkes disease.</title>
        <authorList>
            <person name="Ogawa A."/>
            <person name="Yamamoto S."/>
            <person name="Takayanagi M."/>
            <person name="Kogo T."/>
            <person name="Kanazawa M."/>
            <person name="Kohno Y."/>
        </authorList>
    </citation>
    <scope>VARIANT MNK ARG-873</scope>
</reference>
<reference key="35">
    <citation type="journal article" date="2001" name="Am. J. Hum. Genet.">
        <title>A novel frameshift mutation in exon 23 of ATP7A (MNK) results in occipital horn syndrome and not in Menkes disease.</title>
        <authorList>
            <person name="Dagenais S.L."/>
            <person name="Adam A.N."/>
            <person name="Innis J.W."/>
            <person name="Glover T.W."/>
        </authorList>
    </citation>
    <scope>INVOLVEMENT IN OCCIPITAL HORN SYNDROME</scope>
</reference>
<reference key="36">
    <citation type="journal article" date="2001" name="Am. J. Med. Genet.">
        <title>ATP7A gene mutations in 16 patients with Menkes disease and a patient with occipital horn syndrome.</title>
        <authorList>
            <person name="Gu Y.-H."/>
            <person name="Kodama H."/>
            <person name="Murata Y."/>
            <person name="Mochizuki D."/>
            <person name="Yanagawa Y."/>
            <person name="Ushijima H."/>
            <person name="Shiba T."/>
            <person name="Lee C.-C."/>
        </authorList>
    </citation>
    <scope>VARIANTS MNK ARG-1344 AND PHE-1345</scope>
</reference>
<reference key="37">
    <citation type="journal article" date="2001" name="Mol. Genet. Metab.">
        <title>Identification of four novel mutations in classical Menkes disease and successful prenatal DNA diagnosis.</title>
        <authorList>
            <person name="Hahn S."/>
            <person name="Cho K."/>
            <person name="Ryu K."/>
            <person name="Kim J."/>
            <person name="Pai K."/>
            <person name="Kim M."/>
            <person name="Park H."/>
            <person name="Yoo O."/>
        </authorList>
    </citation>
    <scope>VARIANTS MNK ARG-706; ASP-1118 AND ARG-1255</scope>
</reference>
<reference key="38">
    <citation type="journal article" date="2005" name="Hum. Mutat.">
        <title>Identification and analysis of 21 novel disease-causing amino acid substitutions in the conserved part of ATP7A.</title>
        <authorList>
            <person name="Moeller L.B."/>
            <person name="Bukrinsky J.T."/>
            <person name="Moelgaard A."/>
            <person name="Paulsen M."/>
            <person name="Lund C."/>
            <person name="Tuemer Z."/>
            <person name="Larsen S."/>
            <person name="Horn N."/>
        </authorList>
    </citation>
    <scope>VARIANTS MNK HIS-844; ARG-853; VAL-860; ARG-876; GLU-876; ARG-924; ARG-1000; VAL-1007; ASP-1015; GLY-1044; PRO-1100; GLU-1282; GLU-1300; VAL-1302; LYS-1304; ALA-1305; ARG-1315; VAL-1325; ARG-1369 AND PHE-1397</scope>
</reference>
<reference key="39">
    <citation type="journal article" date="2006" name="Genet. Med.">
        <title>Functional copper transport explains neurologic sparing in occipital horn syndrome.</title>
        <authorList>
            <person name="Tang J."/>
            <person name="Robertson S."/>
            <person name="Lem K.E."/>
            <person name="Godwin S.C."/>
            <person name="Kaler S.G."/>
        </authorList>
    </citation>
    <scope>VARIANT OHS SER-1304</scope>
    <scope>CHARACTERIZATION OF VARIANT OHS SER-1304</scope>
</reference>
<reference key="40">
    <citation type="journal article" date="2010" name="Am. J. Hum. Genet.">
        <title>Missense mutations in the copper transporter gene ATP7A cause X-linked distal hereditary motor neuropathy.</title>
        <authorList>
            <person name="Kennerson M.L."/>
            <person name="Nicholson G.A."/>
            <person name="Kaler S.G."/>
            <person name="Kowalski B."/>
            <person name="Mercer J.F.B."/>
            <person name="Tang J."/>
            <person name="Llanos R.M."/>
            <person name="Chu S."/>
            <person name="Takata R.I."/>
            <person name="Speck-Martins C.E."/>
            <person name="Baets J."/>
            <person name="Almeida-Souza L."/>
            <person name="Fischer D."/>
            <person name="Timmerman V."/>
            <person name="Taylor P.E."/>
            <person name="Scherer S.S."/>
            <person name="Ferguson T.A."/>
            <person name="Bird T.D."/>
            <person name="De Jonghe P."/>
            <person name="Feely S.M.E."/>
            <person name="Shy M.E."/>
            <person name="Garbern J.Y."/>
        </authorList>
    </citation>
    <scope>VARIANTS HMNX ILE-994 AND SER-1386</scope>
    <scope>CHARACTERIZATION OF VARIANTS HMNX ILE-994 AND SER-1386</scope>
</reference>
<reference key="41">
    <citation type="journal article" date="2012" name="BMC Pediatr.">
        <title>The T1048I mutation in ATP7A gene causes an unusual Menkes disease presentation.</title>
        <authorList>
            <person name="De Leon-Garcia G."/>
            <person name="Santana A."/>
            <person name="Villegas-Sepulveda N."/>
            <person name="Perez-Gonzalez C."/>
            <person name="Henrriquez-Esquiroz J.M."/>
            <person name="De Leon-Garcia C."/>
            <person name="Wong C."/>
            <person name="Baeza I."/>
        </authorList>
    </citation>
    <scope>VARIANT MNK ILE-1048</scope>
</reference>
<reference key="42">
    <citation type="journal article" date="2017" name="Sci. Rep.">
        <title>Characterization of ATP7A missense mutants suggests a correlation between intracellular trafficking and severity of Menkes disease.</title>
        <authorList>
            <person name="Skjoerringe T."/>
            <person name="Amstrup Pedersen P."/>
            <person name="Salling Thorborg S."/>
            <person name="Nissen P."/>
            <person name="Gourdon P."/>
            <person name="Birk Moeller L."/>
        </authorList>
    </citation>
    <scope>FUNCTION</scope>
    <scope>CATALYTIC ACTIVITY</scope>
    <scope>SUBCELLULAR LOCATION</scope>
    <scope>CHARACTERIZATION OF VARIANTS MNK VAL-628; ARG-633; TYR-653; ARG-666; ARG-727; ASP-728; PRO-761; ASN-802; HIS-844; VAL-860; ARG-876; GLU-876; ARG-1000; ARG-1005; VAL-1007; ASP-1015; ASN-1037; GLY-1044; ARG-1255; GLU-1282; GLU-1300; GLY-1301; GLU-1302; VAL-1302; LYS-1304; ALA-1305; GLY-1305; ASP-1308; ARG-1315; VAL-1325; VAL-1362; ARG-1369; PRO-1373; THR-1393 AND PHE-1397</scope>
    <scope>CHARACTERIZATION OF VARIANT OHS ARG-924</scope>
</reference>